<organism>
    <name type="scientific">Homo sapiens</name>
    <name type="common">Human</name>
    <dbReference type="NCBI Taxonomy" id="9606"/>
    <lineage>
        <taxon>Eukaryota</taxon>
        <taxon>Metazoa</taxon>
        <taxon>Chordata</taxon>
        <taxon>Craniata</taxon>
        <taxon>Vertebrata</taxon>
        <taxon>Euteleostomi</taxon>
        <taxon>Mammalia</taxon>
        <taxon>Eutheria</taxon>
        <taxon>Euarchontoglires</taxon>
        <taxon>Primates</taxon>
        <taxon>Haplorrhini</taxon>
        <taxon>Catarrhini</taxon>
        <taxon>Hominidae</taxon>
        <taxon>Homo</taxon>
    </lineage>
</organism>
<keyword id="KW-0002">3D-structure</keyword>
<keyword id="KW-0007">Acetylation</keyword>
<keyword id="KW-0025">Alternative splicing</keyword>
<keyword id="KW-0903">Direct protein sequencing</keyword>
<keyword id="KW-0225">Disease variant</keyword>
<keyword id="KW-0274">FAD</keyword>
<keyword id="KW-0276">Fatty acid metabolism</keyword>
<keyword id="KW-0285">Flavoprotein</keyword>
<keyword id="KW-0443">Lipid metabolism</keyword>
<keyword id="KW-0496">Mitochondrion</keyword>
<keyword id="KW-0560">Oxidoreductase</keyword>
<keyword id="KW-0597">Phosphoprotein</keyword>
<keyword id="KW-1267">Proteomics identification</keyword>
<keyword id="KW-1185">Reference proteome</keyword>
<keyword id="KW-0809">Transit peptide</keyword>
<evidence type="ECO:0000250" key="1">
    <source>
        <dbReference type="UniProtKB" id="P08503"/>
    </source>
</evidence>
<evidence type="ECO:0000250" key="2">
    <source>
        <dbReference type="UniProtKB" id="P45952"/>
    </source>
</evidence>
<evidence type="ECO:0000269" key="3">
    <source>
    </source>
</evidence>
<evidence type="ECO:0000269" key="4">
    <source>
    </source>
</evidence>
<evidence type="ECO:0000269" key="5">
    <source>
    </source>
</evidence>
<evidence type="ECO:0000269" key="6">
    <source>
    </source>
</evidence>
<evidence type="ECO:0000269" key="7">
    <source>
    </source>
</evidence>
<evidence type="ECO:0000269" key="8">
    <source>
    </source>
</evidence>
<evidence type="ECO:0000269" key="9">
    <source>
    </source>
</evidence>
<evidence type="ECO:0000269" key="10">
    <source>
    </source>
</evidence>
<evidence type="ECO:0000269" key="11">
    <source>
    </source>
</evidence>
<evidence type="ECO:0000269" key="12">
    <source>
    </source>
</evidence>
<evidence type="ECO:0000269" key="13">
    <source>
    </source>
</evidence>
<evidence type="ECO:0000269" key="14">
    <source>
    </source>
</evidence>
<evidence type="ECO:0000269" key="15">
    <source>
    </source>
</evidence>
<evidence type="ECO:0000269" key="16">
    <source>
    </source>
</evidence>
<evidence type="ECO:0000269" key="17">
    <source>
    </source>
</evidence>
<evidence type="ECO:0000269" key="18">
    <source>
    </source>
</evidence>
<evidence type="ECO:0000269" key="19">
    <source>
    </source>
</evidence>
<evidence type="ECO:0000269" key="20">
    <source>
    </source>
</evidence>
<evidence type="ECO:0000269" key="21">
    <source>
    </source>
</evidence>
<evidence type="ECO:0000269" key="22">
    <source>
    </source>
</evidence>
<evidence type="ECO:0000269" key="23">
    <source>
    </source>
</evidence>
<evidence type="ECO:0000269" key="24">
    <source>
    </source>
</evidence>
<evidence type="ECO:0000269" key="25">
    <source>
    </source>
</evidence>
<evidence type="ECO:0000269" key="26">
    <source>
    </source>
</evidence>
<evidence type="ECO:0000269" key="27">
    <source>
    </source>
</evidence>
<evidence type="ECO:0000269" key="28">
    <source>
    </source>
</evidence>
<evidence type="ECO:0000269" key="29">
    <source ref="23"/>
</evidence>
<evidence type="ECO:0000303" key="30">
    <source>
    </source>
</evidence>
<evidence type="ECO:0000303" key="31">
    <source>
    </source>
</evidence>
<evidence type="ECO:0000303" key="32">
    <source ref="3"/>
</evidence>
<evidence type="ECO:0000305" key="33"/>
<evidence type="ECO:0000305" key="34">
    <source>
    </source>
</evidence>
<evidence type="ECO:0000305" key="35">
    <source>
    </source>
</evidence>
<evidence type="ECO:0000305" key="36">
    <source>
    </source>
</evidence>
<evidence type="ECO:0000305" key="37">
    <source>
    </source>
</evidence>
<evidence type="ECO:0000312" key="38">
    <source>
        <dbReference type="HGNC" id="HGNC:89"/>
    </source>
</evidence>
<evidence type="ECO:0007744" key="39">
    <source>
        <dbReference type="PDB" id="1EGC"/>
    </source>
</evidence>
<evidence type="ECO:0007744" key="40">
    <source>
        <dbReference type="PDB" id="1EGD"/>
    </source>
</evidence>
<evidence type="ECO:0007744" key="41">
    <source>
        <dbReference type="PDB" id="1EGE"/>
    </source>
</evidence>
<evidence type="ECO:0007744" key="42">
    <source>
        <dbReference type="PDB" id="1T9G"/>
    </source>
</evidence>
<evidence type="ECO:0007744" key="43">
    <source>
        <dbReference type="PDB" id="2A1T"/>
    </source>
</evidence>
<evidence type="ECO:0007744" key="44">
    <source>
        <dbReference type="PDB" id="4P13"/>
    </source>
</evidence>
<evidence type="ECO:0007744" key="45">
    <source>
    </source>
</evidence>
<evidence type="ECO:0007829" key="46">
    <source>
        <dbReference type="PDB" id="1EGC"/>
    </source>
</evidence>
<evidence type="ECO:0007829" key="47">
    <source>
        <dbReference type="PDB" id="1EGD"/>
    </source>
</evidence>
<evidence type="ECO:0007829" key="48">
    <source>
        <dbReference type="PDB" id="1EGE"/>
    </source>
</evidence>
<evidence type="ECO:0007829" key="49">
    <source>
        <dbReference type="PDB" id="4P13"/>
    </source>
</evidence>
<comment type="function">
    <text evidence="8 15 16 17 21 25">Medium-chain specific acyl-CoA dehydrogenase is one of the acyl-CoA dehydrogenases that catalyze the first step of mitochondrial fatty acid beta-oxidation, an aerobic process breaking down fatty acids into acetyl-CoA and allowing the production of energy from fats (PubMed:1970566, PubMed:21237683, PubMed:2251268, PubMed:8823175). The first step of fatty acid beta-oxidation consists in the removal of one hydrogen from C-2 and C-3 of the straight-chain fatty acyl-CoA thioester, resulting in the formation of trans-2-enoyl-CoA (PubMed:2251268). Electron transfer flavoprotein (ETF) is the electron acceptor that transfers electrons to the main mitochondrial respiratory chain via ETF-ubiquinone oxidoreductase (ETF dehydrogenase) (PubMed:15159392, PubMed:25416781). Among the different mitochondrial acyl-CoA dehydrogenases, medium-chain specific acyl-CoA dehydrogenase acts specifically on acyl-CoAs with saturated 6 to 12 carbons long primary chains (PubMed:1970566, PubMed:21237683, PubMed:2251268, PubMed:8823175).</text>
</comment>
<comment type="catalytic activity">
    <reaction evidence="15 16 25">
        <text>a medium-chain 2,3-saturated fatty acyl-CoA + oxidized [electron-transfer flavoprotein] + H(+) = a medium-chain (2E)-enoyl-CoA + reduced [electron-transfer flavoprotein]</text>
        <dbReference type="Rhea" id="RHEA:14477"/>
        <dbReference type="Rhea" id="RHEA-COMP:10685"/>
        <dbReference type="Rhea" id="RHEA-COMP:10686"/>
        <dbReference type="ChEBI" id="CHEBI:15378"/>
        <dbReference type="ChEBI" id="CHEBI:57692"/>
        <dbReference type="ChEBI" id="CHEBI:58307"/>
        <dbReference type="ChEBI" id="CHEBI:83723"/>
        <dbReference type="ChEBI" id="CHEBI:83726"/>
        <dbReference type="EC" id="1.3.8.7"/>
    </reaction>
    <physiologicalReaction direction="left-to-right" evidence="34">
        <dbReference type="Rhea" id="RHEA:14478"/>
    </physiologicalReaction>
</comment>
<comment type="catalytic activity">
    <reaction evidence="1">
        <text>pentanoyl-CoA + oxidized [electron-transfer flavoprotein] + H(+) = (2E)-pentenoyl-CoA + reduced [electron-transfer flavoprotein]</text>
        <dbReference type="Rhea" id="RHEA:43456"/>
        <dbReference type="Rhea" id="RHEA-COMP:10685"/>
        <dbReference type="Rhea" id="RHEA-COMP:10686"/>
        <dbReference type="ChEBI" id="CHEBI:15378"/>
        <dbReference type="ChEBI" id="CHEBI:57389"/>
        <dbReference type="ChEBI" id="CHEBI:57692"/>
        <dbReference type="ChEBI" id="CHEBI:58307"/>
        <dbReference type="ChEBI" id="CHEBI:86160"/>
    </reaction>
    <physiologicalReaction direction="left-to-right" evidence="1">
        <dbReference type="Rhea" id="RHEA:43457"/>
    </physiologicalReaction>
</comment>
<comment type="catalytic activity">
    <reaction evidence="16 25">
        <text>hexanoyl-CoA + oxidized [electron-transfer flavoprotein] + H(+) = (2E)-hexenoyl-CoA + reduced [electron-transfer flavoprotein]</text>
        <dbReference type="Rhea" id="RHEA:43464"/>
        <dbReference type="Rhea" id="RHEA-COMP:10685"/>
        <dbReference type="Rhea" id="RHEA-COMP:10686"/>
        <dbReference type="ChEBI" id="CHEBI:15378"/>
        <dbReference type="ChEBI" id="CHEBI:57692"/>
        <dbReference type="ChEBI" id="CHEBI:58307"/>
        <dbReference type="ChEBI" id="CHEBI:62077"/>
        <dbReference type="ChEBI" id="CHEBI:62620"/>
    </reaction>
    <physiologicalReaction direction="left-to-right" evidence="36">
        <dbReference type="Rhea" id="RHEA:43465"/>
    </physiologicalReaction>
</comment>
<comment type="catalytic activity">
    <reaction evidence="15 16 25">
        <text>octanoyl-CoA + oxidized [electron-transfer flavoprotein] + H(+) = (2E)-octenoyl-CoA + reduced [electron-transfer flavoprotein]</text>
        <dbReference type="Rhea" id="RHEA:48180"/>
        <dbReference type="Rhea" id="RHEA-COMP:10685"/>
        <dbReference type="Rhea" id="RHEA-COMP:10686"/>
        <dbReference type="ChEBI" id="CHEBI:15378"/>
        <dbReference type="ChEBI" id="CHEBI:57386"/>
        <dbReference type="ChEBI" id="CHEBI:57692"/>
        <dbReference type="ChEBI" id="CHEBI:58307"/>
        <dbReference type="ChEBI" id="CHEBI:62242"/>
    </reaction>
    <physiologicalReaction direction="left-to-right" evidence="34">
        <dbReference type="Rhea" id="RHEA:48181"/>
    </physiologicalReaction>
</comment>
<comment type="catalytic activity">
    <reaction evidence="16 25">
        <text>decanoyl-CoA + oxidized [electron-transfer flavoprotein] + H(+) = (2E)-decenoyl-CoA + reduced [electron-transfer flavoprotein]</text>
        <dbReference type="Rhea" id="RHEA:48176"/>
        <dbReference type="Rhea" id="RHEA-COMP:10685"/>
        <dbReference type="Rhea" id="RHEA-COMP:10686"/>
        <dbReference type="ChEBI" id="CHEBI:15378"/>
        <dbReference type="ChEBI" id="CHEBI:57692"/>
        <dbReference type="ChEBI" id="CHEBI:58307"/>
        <dbReference type="ChEBI" id="CHEBI:61406"/>
        <dbReference type="ChEBI" id="CHEBI:61430"/>
    </reaction>
    <physiologicalReaction direction="left-to-right" evidence="36">
        <dbReference type="Rhea" id="RHEA:48177"/>
    </physiologicalReaction>
</comment>
<comment type="catalytic activity">
    <reaction evidence="16 25">
        <text>dodecanoyl-CoA + oxidized [electron-transfer flavoprotein] + H(+) = (2E)-dodecenoyl-CoA + reduced [electron-transfer flavoprotein]</text>
        <dbReference type="Rhea" id="RHEA:47296"/>
        <dbReference type="Rhea" id="RHEA-COMP:10685"/>
        <dbReference type="Rhea" id="RHEA-COMP:10686"/>
        <dbReference type="ChEBI" id="CHEBI:15378"/>
        <dbReference type="ChEBI" id="CHEBI:57330"/>
        <dbReference type="ChEBI" id="CHEBI:57375"/>
        <dbReference type="ChEBI" id="CHEBI:57692"/>
        <dbReference type="ChEBI" id="CHEBI:58307"/>
    </reaction>
    <physiologicalReaction direction="left-to-right" evidence="36">
        <dbReference type="Rhea" id="RHEA:47297"/>
    </physiologicalReaction>
</comment>
<comment type="catalytic activity">
    <reaction evidence="16 25">
        <text>tetradecanoyl-CoA + oxidized [electron-transfer flavoprotein] + H(+) = (2E)-tetradecenoyl-CoA + reduced [electron-transfer flavoprotein]</text>
        <dbReference type="Rhea" id="RHEA:47316"/>
        <dbReference type="Rhea" id="RHEA-COMP:10685"/>
        <dbReference type="Rhea" id="RHEA-COMP:10686"/>
        <dbReference type="ChEBI" id="CHEBI:15378"/>
        <dbReference type="ChEBI" id="CHEBI:57385"/>
        <dbReference type="ChEBI" id="CHEBI:57692"/>
        <dbReference type="ChEBI" id="CHEBI:58307"/>
        <dbReference type="ChEBI" id="CHEBI:61405"/>
    </reaction>
    <physiologicalReaction direction="left-to-right" evidence="36">
        <dbReference type="Rhea" id="RHEA:47317"/>
    </physiologicalReaction>
</comment>
<comment type="catalytic activity">
    <reaction evidence="16 25">
        <text>oxidized [electron-transfer flavoprotein] + hexadecanoyl-CoA + H(+) = (2E)-hexadecenoyl-CoA + reduced [electron-transfer flavoprotein]</text>
        <dbReference type="Rhea" id="RHEA:43448"/>
        <dbReference type="Rhea" id="RHEA-COMP:10685"/>
        <dbReference type="Rhea" id="RHEA-COMP:10686"/>
        <dbReference type="ChEBI" id="CHEBI:15378"/>
        <dbReference type="ChEBI" id="CHEBI:57379"/>
        <dbReference type="ChEBI" id="CHEBI:57692"/>
        <dbReference type="ChEBI" id="CHEBI:58307"/>
        <dbReference type="ChEBI" id="CHEBI:61526"/>
    </reaction>
    <physiologicalReaction direction="left-to-right" evidence="36">
        <dbReference type="Rhea" id="RHEA:43449"/>
    </physiologicalReaction>
</comment>
<comment type="cofactor">
    <cofactor evidence="8 9 26 29">
        <name>FAD</name>
        <dbReference type="ChEBI" id="CHEBI:57692"/>
    </cofactor>
</comment>
<comment type="biophysicochemical properties">
    <kinetics>
        <KM evidence="25">175 uM for butyryl-CoA</KM>
        <KM evidence="25">15 uM for hexanoyl-CoA</KM>
        <KM evidence="25">3.4 uM for octanoyl-CoA</KM>
        <KM evidence="25">2.5 uM for decanoyl-CoA</KM>
        <KM evidence="25">2.5 uM for dodecanoyl-CoA</KM>
        <KM evidence="25">2.3 uM for tetradecanoyl-CoA</KM>
        <KM evidence="25">1.6 uM for hexadecanoyl-CoA</KM>
    </kinetics>
</comment>
<comment type="pathway">
    <text evidence="17">Lipid metabolism; mitochondrial fatty acid beta-oxidation.</text>
</comment>
<comment type="subunit">
    <text evidence="8 9 26 29">Homotetramer (PubMed:8823176, Ref.23). Interacts with the heterodimeric electron transfer flavoprotein ETF.</text>
</comment>
<comment type="interaction">
    <interactant intactId="EBI-44440161">
        <id>PRO_0000000502</id>
    </interactant>
    <interactant intactId="EBI-44440161">
        <id>PRO_0000000502</id>
        <label>ACADM</label>
        <dbReference type="UniProtKB" id="P11310"/>
    </interactant>
    <organismsDiffer>false</organismsDiffer>
    <experiments>2</experiments>
</comment>
<comment type="subcellular location">
    <subcellularLocation>
        <location evidence="10">Mitochondrion matrix</location>
    </subcellularLocation>
</comment>
<comment type="alternative products">
    <event type="alternative splicing"/>
    <isoform>
        <id>P11310-1</id>
        <name>1</name>
        <sequence type="displayed"/>
    </isoform>
    <isoform>
        <id>P11310-2</id>
        <name>2</name>
        <sequence type="described" ref="VSP_038420"/>
    </isoform>
</comment>
<comment type="PTM">
    <text evidence="20">Acetylated. Could occur at proximity of the cofactor-binding sites and reduce the catalytic activity. Could be deacetylated by SIRT3.</text>
</comment>
<comment type="disease" evidence="3 4 5 6 7 11 12 14 17 18 19 22 23 24 27 28">
    <disease id="DI-01956">
        <name>Acyl-CoA dehydrogenase medium-chain deficiency</name>
        <acronym>ACADMD</acronym>
        <description>An inborn error of mitochondrial fatty acid beta-oxidation which causes fasting hypoglycemia, hepatic dysfunction and encephalopathy, often resulting in death in infancy.</description>
        <dbReference type="MIM" id="201450"/>
    </disease>
    <text>The disease is caused by variants affecting the gene represented in this entry.</text>
</comment>
<comment type="similarity">
    <text evidence="33">Belongs to the acyl-CoA dehydrogenase family.</text>
</comment>
<sequence length="421" mass="46588">MAAGFGRCCRVLRSISRFHWRSQHTKANRQREPGLGFSFEFTEQQKEFQATARKFAREEIIPVAAEYDKTGEYPVPLIRRAWELGLMNTHIPENCGGLGLGTFDACLISEELAYGCTGVQTAIEGNSLGQMPIIIAGNDQQKKKYLGRMTEEPLMCAYCVTEPGAGSDVAGIKTKAEKKGDEYIINGQKMWITNGGKANWYFLLARSDPDPKAPANKAFTGFIVEADTPGIQIGRKELNMGQRCSDTRGIVFEDVKVPKENVLIGDGAGFKVAMGAFDKTRPVVAAGAVGLAQRALDEATKYALERKTFGKLLVEHQAISFMLAEMAMKVELARMSYQRAAWEVDSGRRNTYYASIAKAFAGDIANQLATDAVQILGGNGFNTEYPVEKLMRDAKIYQIYEGTSQIQRLIVAREHIDKYKN</sequence>
<reference key="1">
    <citation type="journal article" date="1987" name="Proc. Natl. Acad. Sci. U.S.A.">
        <title>Nucleotide sequence of medium-chain acyl-CoA dehydrogenase mRNA and its expression in enzyme-deficient human tissue.</title>
        <authorList>
            <person name="Kelly D.P."/>
            <person name="Kim J.-J.P."/>
            <person name="Billadello J.J."/>
            <person name="Hainline B.E."/>
            <person name="Chu T.W."/>
            <person name="Strauss A.W."/>
        </authorList>
    </citation>
    <scope>NUCLEOTIDE SEQUENCE [MRNA] (ISOFORM 1)</scope>
</reference>
<reference key="2">
    <citation type="journal article" date="1992" name="Biochemistry">
        <title>Structural organization and regulatory regions of the human medium-chain acyl-CoA dehydrogenase gene.</title>
        <authorList>
            <person name="Zhang Z.F."/>
            <person name="Kelly D.P."/>
            <person name="Kim J.-J.P."/>
            <person name="Zhou Y.Q."/>
            <person name="Ogden M.L."/>
            <person name="Whelan A.J."/>
            <person name="Strauss A.W."/>
        </authorList>
    </citation>
    <scope>NUCLEOTIDE SEQUENCE [GENOMIC DNA] (ISOFORM 1)</scope>
</reference>
<reference key="3">
    <citation type="submission" date="2000-03" db="EMBL/GenBank/DDBJ databases">
        <title>Medium-chain acyl-CoA dehydrogenase.</title>
        <authorList>
            <person name="Sun F."/>
            <person name="Wang Y."/>
            <person name="Block G.D."/>
        </authorList>
    </citation>
    <scope>NUCLEOTIDE SEQUENCE [MRNA] (ISOFORM 2)</scope>
    <source>
        <tissue>Colon</tissue>
    </source>
</reference>
<reference key="4">
    <citation type="journal article" date="2004" name="Nat. Genet.">
        <title>Complete sequencing and characterization of 21,243 full-length human cDNAs.</title>
        <authorList>
            <person name="Ota T."/>
            <person name="Suzuki Y."/>
            <person name="Nishikawa T."/>
            <person name="Otsuki T."/>
            <person name="Sugiyama T."/>
            <person name="Irie R."/>
            <person name="Wakamatsu A."/>
            <person name="Hayashi K."/>
            <person name="Sato H."/>
            <person name="Nagai K."/>
            <person name="Kimura K."/>
            <person name="Makita H."/>
            <person name="Sekine M."/>
            <person name="Obayashi M."/>
            <person name="Nishi T."/>
            <person name="Shibahara T."/>
            <person name="Tanaka T."/>
            <person name="Ishii S."/>
            <person name="Yamamoto J."/>
            <person name="Saito K."/>
            <person name="Kawai Y."/>
            <person name="Isono Y."/>
            <person name="Nakamura Y."/>
            <person name="Nagahari K."/>
            <person name="Murakami K."/>
            <person name="Yasuda T."/>
            <person name="Iwayanagi T."/>
            <person name="Wagatsuma M."/>
            <person name="Shiratori A."/>
            <person name="Sudo H."/>
            <person name="Hosoiri T."/>
            <person name="Kaku Y."/>
            <person name="Kodaira H."/>
            <person name="Kondo H."/>
            <person name="Sugawara M."/>
            <person name="Takahashi M."/>
            <person name="Kanda K."/>
            <person name="Yokoi T."/>
            <person name="Furuya T."/>
            <person name="Kikkawa E."/>
            <person name="Omura Y."/>
            <person name="Abe K."/>
            <person name="Kamihara K."/>
            <person name="Katsuta N."/>
            <person name="Sato K."/>
            <person name="Tanikawa M."/>
            <person name="Yamazaki M."/>
            <person name="Ninomiya K."/>
            <person name="Ishibashi T."/>
            <person name="Yamashita H."/>
            <person name="Murakawa K."/>
            <person name="Fujimori K."/>
            <person name="Tanai H."/>
            <person name="Kimata M."/>
            <person name="Watanabe M."/>
            <person name="Hiraoka S."/>
            <person name="Chiba Y."/>
            <person name="Ishida S."/>
            <person name="Ono Y."/>
            <person name="Takiguchi S."/>
            <person name="Watanabe S."/>
            <person name="Yosida M."/>
            <person name="Hotuta T."/>
            <person name="Kusano J."/>
            <person name="Kanehori K."/>
            <person name="Takahashi-Fujii A."/>
            <person name="Hara H."/>
            <person name="Tanase T.-O."/>
            <person name="Nomura Y."/>
            <person name="Togiya S."/>
            <person name="Komai F."/>
            <person name="Hara R."/>
            <person name="Takeuchi K."/>
            <person name="Arita M."/>
            <person name="Imose N."/>
            <person name="Musashino K."/>
            <person name="Yuuki H."/>
            <person name="Oshima A."/>
            <person name="Sasaki N."/>
            <person name="Aotsuka S."/>
            <person name="Yoshikawa Y."/>
            <person name="Matsunawa H."/>
            <person name="Ichihara T."/>
            <person name="Shiohata N."/>
            <person name="Sano S."/>
            <person name="Moriya S."/>
            <person name="Momiyama H."/>
            <person name="Satoh N."/>
            <person name="Takami S."/>
            <person name="Terashima Y."/>
            <person name="Suzuki O."/>
            <person name="Nakagawa S."/>
            <person name="Senoh A."/>
            <person name="Mizoguchi H."/>
            <person name="Goto Y."/>
            <person name="Shimizu F."/>
            <person name="Wakebe H."/>
            <person name="Hishigaki H."/>
            <person name="Watanabe T."/>
            <person name="Sugiyama A."/>
            <person name="Takemoto M."/>
            <person name="Kawakami B."/>
            <person name="Yamazaki M."/>
            <person name="Watanabe K."/>
            <person name="Kumagai A."/>
            <person name="Itakura S."/>
            <person name="Fukuzumi Y."/>
            <person name="Fujimori Y."/>
            <person name="Komiyama M."/>
            <person name="Tashiro H."/>
            <person name="Tanigami A."/>
            <person name="Fujiwara T."/>
            <person name="Ono T."/>
            <person name="Yamada K."/>
            <person name="Fujii Y."/>
            <person name="Ozaki K."/>
            <person name="Hirao M."/>
            <person name="Ohmori Y."/>
            <person name="Kawabata A."/>
            <person name="Hikiji T."/>
            <person name="Kobatake N."/>
            <person name="Inagaki H."/>
            <person name="Ikema Y."/>
            <person name="Okamoto S."/>
            <person name="Okitani R."/>
            <person name="Kawakami T."/>
            <person name="Noguchi S."/>
            <person name="Itoh T."/>
            <person name="Shigeta K."/>
            <person name="Senba T."/>
            <person name="Matsumura K."/>
            <person name="Nakajima Y."/>
            <person name="Mizuno T."/>
            <person name="Morinaga M."/>
            <person name="Sasaki M."/>
            <person name="Togashi T."/>
            <person name="Oyama M."/>
            <person name="Hata H."/>
            <person name="Watanabe M."/>
            <person name="Komatsu T."/>
            <person name="Mizushima-Sugano J."/>
            <person name="Satoh T."/>
            <person name="Shirai Y."/>
            <person name="Takahashi Y."/>
            <person name="Nakagawa K."/>
            <person name="Okumura K."/>
            <person name="Nagase T."/>
            <person name="Nomura N."/>
            <person name="Kikuchi H."/>
            <person name="Masuho Y."/>
            <person name="Yamashita R."/>
            <person name="Nakai K."/>
            <person name="Yada T."/>
            <person name="Nakamura Y."/>
            <person name="Ohara O."/>
            <person name="Isogai T."/>
            <person name="Sugano S."/>
        </authorList>
    </citation>
    <scope>NUCLEOTIDE SEQUENCE [LARGE SCALE MRNA] (ISOFORM 1)</scope>
    <source>
        <tissue>Heart</tissue>
    </source>
</reference>
<reference key="5">
    <citation type="journal article" date="2006" name="Nature">
        <title>The DNA sequence and biological annotation of human chromosome 1.</title>
        <authorList>
            <person name="Gregory S.G."/>
            <person name="Barlow K.F."/>
            <person name="McLay K.E."/>
            <person name="Kaul R."/>
            <person name="Swarbreck D."/>
            <person name="Dunham A."/>
            <person name="Scott C.E."/>
            <person name="Howe K.L."/>
            <person name="Woodfine K."/>
            <person name="Spencer C.C.A."/>
            <person name="Jones M.C."/>
            <person name="Gillson C."/>
            <person name="Searle S."/>
            <person name="Zhou Y."/>
            <person name="Kokocinski F."/>
            <person name="McDonald L."/>
            <person name="Evans R."/>
            <person name="Phillips K."/>
            <person name="Atkinson A."/>
            <person name="Cooper R."/>
            <person name="Jones C."/>
            <person name="Hall R.E."/>
            <person name="Andrews T.D."/>
            <person name="Lloyd C."/>
            <person name="Ainscough R."/>
            <person name="Almeida J.P."/>
            <person name="Ambrose K.D."/>
            <person name="Anderson F."/>
            <person name="Andrew R.W."/>
            <person name="Ashwell R.I.S."/>
            <person name="Aubin K."/>
            <person name="Babbage A.K."/>
            <person name="Bagguley C.L."/>
            <person name="Bailey J."/>
            <person name="Beasley H."/>
            <person name="Bethel G."/>
            <person name="Bird C.P."/>
            <person name="Bray-Allen S."/>
            <person name="Brown J.Y."/>
            <person name="Brown A.J."/>
            <person name="Buckley D."/>
            <person name="Burton J."/>
            <person name="Bye J."/>
            <person name="Carder C."/>
            <person name="Chapman J.C."/>
            <person name="Clark S.Y."/>
            <person name="Clarke G."/>
            <person name="Clee C."/>
            <person name="Cobley V."/>
            <person name="Collier R.E."/>
            <person name="Corby N."/>
            <person name="Coville G.J."/>
            <person name="Davies J."/>
            <person name="Deadman R."/>
            <person name="Dunn M."/>
            <person name="Earthrowl M."/>
            <person name="Ellington A.G."/>
            <person name="Errington H."/>
            <person name="Frankish A."/>
            <person name="Frankland J."/>
            <person name="French L."/>
            <person name="Garner P."/>
            <person name="Garnett J."/>
            <person name="Gay L."/>
            <person name="Ghori M.R.J."/>
            <person name="Gibson R."/>
            <person name="Gilby L.M."/>
            <person name="Gillett W."/>
            <person name="Glithero R.J."/>
            <person name="Grafham D.V."/>
            <person name="Griffiths C."/>
            <person name="Griffiths-Jones S."/>
            <person name="Grocock R."/>
            <person name="Hammond S."/>
            <person name="Harrison E.S.I."/>
            <person name="Hart E."/>
            <person name="Haugen E."/>
            <person name="Heath P.D."/>
            <person name="Holmes S."/>
            <person name="Holt K."/>
            <person name="Howden P.J."/>
            <person name="Hunt A.R."/>
            <person name="Hunt S.E."/>
            <person name="Hunter G."/>
            <person name="Isherwood J."/>
            <person name="James R."/>
            <person name="Johnson C."/>
            <person name="Johnson D."/>
            <person name="Joy A."/>
            <person name="Kay M."/>
            <person name="Kershaw J.K."/>
            <person name="Kibukawa M."/>
            <person name="Kimberley A.M."/>
            <person name="King A."/>
            <person name="Knights A.J."/>
            <person name="Lad H."/>
            <person name="Laird G."/>
            <person name="Lawlor S."/>
            <person name="Leongamornlert D.A."/>
            <person name="Lloyd D.M."/>
            <person name="Loveland J."/>
            <person name="Lovell J."/>
            <person name="Lush M.J."/>
            <person name="Lyne R."/>
            <person name="Martin S."/>
            <person name="Mashreghi-Mohammadi M."/>
            <person name="Matthews L."/>
            <person name="Matthews N.S.W."/>
            <person name="McLaren S."/>
            <person name="Milne S."/>
            <person name="Mistry S."/>
            <person name="Moore M.J.F."/>
            <person name="Nickerson T."/>
            <person name="O'Dell C.N."/>
            <person name="Oliver K."/>
            <person name="Palmeiri A."/>
            <person name="Palmer S.A."/>
            <person name="Parker A."/>
            <person name="Patel D."/>
            <person name="Pearce A.V."/>
            <person name="Peck A.I."/>
            <person name="Pelan S."/>
            <person name="Phelps K."/>
            <person name="Phillimore B.J."/>
            <person name="Plumb R."/>
            <person name="Rajan J."/>
            <person name="Raymond C."/>
            <person name="Rouse G."/>
            <person name="Saenphimmachak C."/>
            <person name="Sehra H.K."/>
            <person name="Sheridan E."/>
            <person name="Shownkeen R."/>
            <person name="Sims S."/>
            <person name="Skuce C.D."/>
            <person name="Smith M."/>
            <person name="Steward C."/>
            <person name="Subramanian S."/>
            <person name="Sycamore N."/>
            <person name="Tracey A."/>
            <person name="Tromans A."/>
            <person name="Van Helmond Z."/>
            <person name="Wall M."/>
            <person name="Wallis J.M."/>
            <person name="White S."/>
            <person name="Whitehead S.L."/>
            <person name="Wilkinson J.E."/>
            <person name="Willey D.L."/>
            <person name="Williams H."/>
            <person name="Wilming L."/>
            <person name="Wray P.W."/>
            <person name="Wu Z."/>
            <person name="Coulson A."/>
            <person name="Vaudin M."/>
            <person name="Sulston J.E."/>
            <person name="Durbin R.M."/>
            <person name="Hubbard T."/>
            <person name="Wooster R."/>
            <person name="Dunham I."/>
            <person name="Carter N.P."/>
            <person name="McVean G."/>
            <person name="Ross M.T."/>
            <person name="Harrow J."/>
            <person name="Olson M.V."/>
            <person name="Beck S."/>
            <person name="Rogers J."/>
            <person name="Bentley D.R."/>
        </authorList>
    </citation>
    <scope>NUCLEOTIDE SEQUENCE [LARGE SCALE GENOMIC DNA]</scope>
</reference>
<reference key="6">
    <citation type="submission" date="2005-09" db="EMBL/GenBank/DDBJ databases">
        <authorList>
            <person name="Mural R.J."/>
            <person name="Istrail S."/>
            <person name="Sutton G.G."/>
            <person name="Florea L."/>
            <person name="Halpern A.L."/>
            <person name="Mobarry C.M."/>
            <person name="Lippert R."/>
            <person name="Walenz B."/>
            <person name="Shatkay H."/>
            <person name="Dew I."/>
            <person name="Miller J.R."/>
            <person name="Flanigan M.J."/>
            <person name="Edwards N.J."/>
            <person name="Bolanos R."/>
            <person name="Fasulo D."/>
            <person name="Halldorsson B.V."/>
            <person name="Hannenhalli S."/>
            <person name="Turner R."/>
            <person name="Yooseph S."/>
            <person name="Lu F."/>
            <person name="Nusskern D.R."/>
            <person name="Shue B.C."/>
            <person name="Zheng X.H."/>
            <person name="Zhong F."/>
            <person name="Delcher A.L."/>
            <person name="Huson D.H."/>
            <person name="Kravitz S.A."/>
            <person name="Mouchard L."/>
            <person name="Reinert K."/>
            <person name="Remington K.A."/>
            <person name="Clark A.G."/>
            <person name="Waterman M.S."/>
            <person name="Eichler E.E."/>
            <person name="Adams M.D."/>
            <person name="Hunkapiller M.W."/>
            <person name="Myers E.W."/>
            <person name="Venter J.C."/>
        </authorList>
    </citation>
    <scope>NUCLEOTIDE SEQUENCE [LARGE SCALE GENOMIC DNA]</scope>
</reference>
<reference key="7">
    <citation type="journal article" date="2004" name="Genome Res.">
        <title>The status, quality, and expansion of the NIH full-length cDNA project: the Mammalian Gene Collection (MGC).</title>
        <authorList>
            <consortium name="The MGC Project Team"/>
        </authorList>
    </citation>
    <scope>NUCLEOTIDE SEQUENCE [LARGE SCALE MRNA] (ISOFORM 1)</scope>
    <source>
        <tissue>Liver</tissue>
    </source>
</reference>
<reference key="8">
    <citation type="submission" date="2007-03" db="UniProtKB">
        <authorList>
            <person name="Lubec G."/>
            <person name="Vishwanath V."/>
        </authorList>
    </citation>
    <scope>PROTEIN SEQUENCE OF 218-235</scope>
    <scope>IDENTIFICATION BY MASS SPECTROMETRY</scope>
    <source>
        <tissue>Brain</tissue>
        <tissue>Cajal-Retzius cell</tissue>
    </source>
</reference>
<reference key="9">
    <citation type="journal article" date="1990" name="Biochem. Biophys. Res. Commun.">
        <title>Identification of a common mutation in patients with medium-chain acyl-CoA dehydrogenase deficiency.</title>
        <authorList>
            <person name="Matsubara Y."/>
            <person name="Narisawa K."/>
            <person name="Miyabayashi S."/>
            <person name="Tada K."/>
            <person name="Coates P.M."/>
            <person name="Bachmann C."/>
            <person name="Elsas L.J. II"/>
            <person name="Pollitt R.J."/>
            <person name="Rhead W.J."/>
            <person name="Roe C.R."/>
        </authorList>
    </citation>
    <scope>NUCLEOTIDE SEQUENCE [GENOMIC DNA] OF 314-342</scope>
    <scope>VARIANT ACADMD GLU-329</scope>
</reference>
<reference key="10">
    <citation type="journal article" date="1990" name="J. Biol. Chem.">
        <title>Characterization of wild-type and an active site mutant of human medium chain acyl-CoA dehydrogenase after expression in Escherichia coli.</title>
        <authorList>
            <person name="Bross P."/>
            <person name="Engst S."/>
            <person name="Strauss A.W."/>
            <person name="Kelly D.P."/>
            <person name="Rasched I."/>
            <person name="Ghisla S."/>
        </authorList>
    </citation>
    <scope>FUNCTION</scope>
    <scope>CATALYTIC ACTIVITY</scope>
    <scope>MUTAGENESIS OF GLU-401</scope>
    <scope>ACTIVE SITE</scope>
</reference>
<reference key="11">
    <citation type="journal article" date="1996" name="Biochemistry">
        <title>Medium-long-chain chimeric human Acyl-CoA dehydrogenase: medium-chain enzyme with the active center base arrangement of long-chain Acyl-CoA dehydrogenase.</title>
        <authorList>
            <person name="Nandy A."/>
            <person name="Kieweg V."/>
            <person name="Kraeutle F.G."/>
            <person name="Vock P."/>
            <person name="Kuechler B."/>
            <person name="Bross P."/>
            <person name="Kim J.J."/>
            <person name="Rasched I."/>
            <person name="Ghisla S."/>
        </authorList>
    </citation>
    <scope>FUNCTION</scope>
    <scope>CATALYTIC ACTIVITY</scope>
    <scope>BIOPHYSICOCHEMICAL PROPERTIES</scope>
    <scope>SUBSTRATE SPECIFICITY</scope>
    <scope>MUTAGENESIS OF THR-280 AND GLU-401</scope>
</reference>
<reference key="12">
    <citation type="journal article" date="2005" name="J. Biol. Chem.">
        <title>Human acyl-CoA dehydrogenase-9 plays a novel role in the mitochondrial beta-oxidation of unsaturated fatty acids.</title>
        <authorList>
            <person name="Ensenauer R."/>
            <person name="He M."/>
            <person name="Willard J.M."/>
            <person name="Goetzman E.S."/>
            <person name="Corydon T.J."/>
            <person name="Vandahl B.B."/>
            <person name="Mohsen A.W."/>
            <person name="Isaya G."/>
            <person name="Vockley J."/>
        </authorList>
    </citation>
    <scope>SUBCELLULAR LOCATION</scope>
</reference>
<reference key="13">
    <citation type="journal article" date="2009" name="Science">
        <title>Lysine acetylation targets protein complexes and co-regulates major cellular functions.</title>
        <authorList>
            <person name="Choudhary C."/>
            <person name="Kumar C."/>
            <person name="Gnad F."/>
            <person name="Nielsen M.L."/>
            <person name="Rehman M."/>
            <person name="Walther T.C."/>
            <person name="Olsen J.V."/>
            <person name="Mann M."/>
        </authorList>
    </citation>
    <scope>ACETYLATION [LARGE SCALE ANALYSIS] AT LYS-279 AND LYS-301</scope>
    <scope>IDENTIFICATION BY MASS SPECTROMETRY [LARGE SCALE ANALYSIS]</scope>
</reference>
<reference key="14">
    <citation type="journal article" date="2011" name="BMC Syst. Biol.">
        <title>Initial characterization of the human central proteome.</title>
        <authorList>
            <person name="Burkard T.R."/>
            <person name="Planyavsky M."/>
            <person name="Kaupe I."/>
            <person name="Breitwieser F.P."/>
            <person name="Buerckstuemmer T."/>
            <person name="Bennett K.L."/>
            <person name="Superti-Furga G."/>
            <person name="Colinge J."/>
        </authorList>
    </citation>
    <scope>IDENTIFICATION BY MASS SPECTROMETRY [LARGE SCALE ANALYSIS]</scope>
</reference>
<reference key="15">
    <citation type="journal article" date="2011" name="Mol. Genet. Metab.">
        <title>Identification and characterization of new long chain acyl-CoA dehydrogenases.</title>
        <authorList>
            <person name="He M."/>
            <person name="Pei Z."/>
            <person name="Mohsen A.W."/>
            <person name="Watkins P."/>
            <person name="Murdoch G."/>
            <person name="Van Veldhoven P.P."/>
            <person name="Ensenauer R."/>
            <person name="Vockley J."/>
        </authorList>
    </citation>
    <scope>FUNCTION</scope>
    <scope>CATALYTIC ACTIVITY</scope>
</reference>
<reference key="16">
    <citation type="journal article" date="2013" name="J. Biol. Chem.">
        <title>SIRT3 regulates long-chain acyl-coA dehydrogenase by deacetylating conserved lysines near the active site.</title>
        <authorList>
            <person name="Bharathi S.S."/>
            <person name="Zhang Y."/>
            <person name="Mohsen A.W."/>
            <person name="Uppala R."/>
            <person name="Balasubramani M."/>
            <person name="Schreiber E."/>
            <person name="Uechi G."/>
            <person name="Beck M.E."/>
            <person name="Rardin M.J."/>
            <person name="Vockley J."/>
            <person name="Verdin E."/>
            <person name="Gibson B.W."/>
            <person name="Hirschey M.D."/>
            <person name="Goetzman E.S."/>
        </authorList>
    </citation>
    <scope>ACETYLATION</scope>
    <scope>DEACETYLATION BY SIRT3</scope>
</reference>
<reference key="17">
    <citation type="journal article" date="2014" name="J. Proteomics">
        <title>An enzyme assisted RP-RPLC approach for in-depth analysis of human liver phosphoproteome.</title>
        <authorList>
            <person name="Bian Y."/>
            <person name="Song C."/>
            <person name="Cheng K."/>
            <person name="Dong M."/>
            <person name="Wang F."/>
            <person name="Huang J."/>
            <person name="Sun D."/>
            <person name="Wang L."/>
            <person name="Ye M."/>
            <person name="Zou H."/>
        </authorList>
    </citation>
    <scope>IDENTIFICATION BY MASS SPECTROMETRY [LARGE SCALE ANALYSIS]</scope>
    <source>
        <tissue>Liver</tissue>
    </source>
</reference>
<reference key="18">
    <citation type="journal article" date="2015" name="J. Biol. Chem.">
        <title>Human METTL20 is a mitochondrial lysine methyltransferase that targets the beta subunit of electron transfer flavoprotein (ETFbeta) and modulates its activity.</title>
        <authorList>
            <person name="Malecki J."/>
            <person name="Ho A.Y."/>
            <person name="Moen A."/>
            <person name="Dahl H.A."/>
            <person name="Falnes P.O."/>
        </authorList>
    </citation>
    <scope>FUNCTION</scope>
</reference>
<reference key="19">
    <citation type="journal article" date="2015" name="Proteomics">
        <title>N-terminome analysis of the human mitochondrial proteome.</title>
        <authorList>
            <person name="Vaca Jacome A.S."/>
            <person name="Rabilloud T."/>
            <person name="Schaeffer-Reiss C."/>
            <person name="Rompais M."/>
            <person name="Ayoub D."/>
            <person name="Lane L."/>
            <person name="Bairoch A."/>
            <person name="Van Dorsselaer A."/>
            <person name="Carapito C."/>
        </authorList>
    </citation>
    <scope>IDENTIFICATION BY MASS SPECTROMETRY [LARGE SCALE ANALYSIS]</scope>
</reference>
<reference evidence="39 40 41" key="20">
    <citation type="journal article" date="1996" name="Biochemistry">
        <title>Crystal structures of the wild type and the Glu376Gly/Thr255Glu mutant of human medium-chain acyl-CoA dehydrogenase: influence of the location of the catalytic base on substrate specificity.</title>
        <authorList>
            <person name="Lee H.J."/>
            <person name="Wang M."/>
            <person name="Paschke R."/>
            <person name="Nandy A."/>
            <person name="Ghisla S."/>
            <person name="Kim J.-J.P."/>
        </authorList>
    </citation>
    <scope>X-RAY CRYSTALLOGRAPHY (2.4 ANGSTROMS) OF 26-421 OF MUTANT GLU-255 AND GLY-401 IN COMPLEX WITH FAD AND OCTANOYL-COENZYME A</scope>
    <scope>COFACTOR</scope>
    <scope>SUBUNIT</scope>
    <scope>ACTIVE SITE</scope>
    <scope>TRANSIT PEPTIDE</scope>
</reference>
<reference evidence="42" key="21">
    <citation type="journal article" date="2004" name="J. Biol. Chem.">
        <title>Extensive domain motion and electron transfer in the human electron transferring flavoprotein.medium chain acyl-CoA dehydrogenase complex.</title>
        <authorList>
            <person name="Toogood H.S."/>
            <person name="van Thiel A."/>
            <person name="Basran J."/>
            <person name="Sutcliffe M.J."/>
            <person name="Scrutton N.S."/>
            <person name="Leys D."/>
        </authorList>
    </citation>
    <scope>X-RAY CRYSTALLOGRAPHY (2.9 ANGSTROMS) OF 26-421 IN COMPLEXES WITH FAD AND THE ETFA-ETFB HETERODIMER</scope>
    <scope>FUNCTION</scope>
    <scope>COFACTOR</scope>
    <scope>MUTAGENESIS OF LEU-86; LEU-98; LEU-100; ILE-108; GLU-237 AND GLU-384</scope>
    <scope>SUBUNIT</scope>
</reference>
<reference evidence="43" key="22">
    <citation type="journal article" date="2005" name="J. Biol. Chem.">
        <title>Stabilization of non-productive conformations underpins rapid electron transfer to electron-transferring flavoprotein.</title>
        <authorList>
            <person name="Toogood H.S."/>
            <person name="van Thiel A."/>
            <person name="Scrutton N.S."/>
            <person name="Leys D."/>
        </authorList>
    </citation>
    <scope>X-RAY CRYSTALLOGRAPHY (2.8 ANGSTROMS) IN COMPLEXES WITH FAD AND THE ETFA-ETFB HETERODIMER</scope>
    <scope>COFACTOR</scope>
    <scope>SUBUNIT</scope>
    <scope>MUTAGENESIS OF TRP-191; GLU-237 AND GLU-384</scope>
</reference>
<reference evidence="44" key="23">
    <citation type="submission" date="2014-02" db="PDB data bank">
        <title>Medium chain acyl-CoA dehydrogenase, K304E mutant.</title>
        <authorList>
            <person name="Battaile K.P."/>
            <person name="Mohsen A.-W."/>
            <person name="Vockley J."/>
        </authorList>
    </citation>
    <scope>X-RAY CRYSTALLOGRAPHY (1.73 ANGSTROMS) OF 35-421 OF VARIANT ACADMD GLU-329 IN COMPLEX WITH FAD</scope>
    <scope>COFACTOR</scope>
    <scope>SUBUNIT</scope>
</reference>
<reference key="24">
    <citation type="journal article" date="1992" name="Hum. Mutat.">
        <title>Mutations in the medium chain acyl-CoA dehydrogenase (MCAD) gene.</title>
        <authorList>
            <person name="Tanaka K."/>
            <person name="Yokota I."/>
            <person name="Coates P.M."/>
            <person name="Strauss A.W."/>
            <person name="Kelly D.P."/>
            <person name="Zhang Z.F."/>
            <person name="Gregersen N."/>
            <person name="Andresen B.S."/>
            <person name="Matsubara Y."/>
            <person name="Curtis D."/>
            <person name="Chen Y.-T."/>
        </authorList>
    </citation>
    <scope>REVIEW ON VARIANTS ACADMD</scope>
</reference>
<reference key="25">
    <citation type="journal article" date="1990" name="J. Clin. Invest.">
        <title>Molecular basis of medium chain acyl-coenzyme A dehydrogenase deficiency. An A to G transition at position 985 that causes a lysine-304 to glutamate substitution in the mature protein is the single prevalent mutation.</title>
        <authorList>
            <person name="Yokota I."/>
            <person name="Indo Y."/>
            <person name="Coates P.M."/>
            <person name="Tanaka K."/>
        </authorList>
    </citation>
    <scope>VARIANT ACADMD GLU-329</scope>
</reference>
<reference key="26">
    <citation type="journal article" date="1990" name="Proc. Natl. Acad. Sci. U.S.A.">
        <title>Molecular characterization of inherited medium-chain acyl-CoA dehydrogenase deficiency.</title>
        <authorList>
            <person name="Kelly D.P."/>
            <person name="Whelan A.J."/>
            <person name="Ogden M.L."/>
            <person name="Alpers R."/>
            <person name="Zhang Z.F."/>
            <person name="Bellus G."/>
            <person name="Gregersen N."/>
            <person name="Dorland L."/>
            <person name="Strauss A.W."/>
        </authorList>
    </citation>
    <scope>VARIANT ACADMD GLU-329</scope>
    <scope>FUNCTION</scope>
    <scope>PATHWAY</scope>
</reference>
<reference key="27">
    <citation type="journal article" date="1991" name="Am. J. Hum. Genet.">
        <title>Molecular survey of a prevalent mutation, 985A-to-G transition, and identification of five infrequent mutations in the medium-chain Acyl-CoA dehydrogenase (MCAD) gene in 55 patients with MCAD deficiency.</title>
        <authorList>
            <person name="Yokota I."/>
            <person name="Coates P.M."/>
            <person name="Hale D.E."/>
            <person name="Rinaldo P."/>
            <person name="Tanaka K."/>
        </authorList>
    </citation>
    <scope>VARIANTS ACADMD ILE-149; ARG-244; ARG-267 AND THR-375</scope>
</reference>
<reference key="28">
    <citation type="journal article" date="1991" name="Hum. Genet.">
        <title>Molecular characterization of medium-chain acyl-CoA dehydrogenase (MCAD) deficiency: identification of a lys329 to glu mutation in the MCAD gene, and expression of inactive mutant enzyme protein in E. coli.</title>
        <authorList>
            <person name="Gregersen N."/>
            <person name="Andresen B.S."/>
            <person name="Bross P."/>
            <person name="Winter V."/>
            <person name="Ruediger N."/>
            <person name="Engst S."/>
            <person name="Christensen E."/>
            <person name="Kelly D."/>
            <person name="Strauss A.W."/>
            <person name="Koelvraa S."/>
            <person name="Bolund L."/>
            <person name="Ghisla S."/>
        </authorList>
    </citation>
    <scope>VARIANT ACADMD GLU-329</scope>
</reference>
<reference key="29">
    <citation type="journal article" date="1991" name="Lancet">
        <title>Frequency of the G985 MCAD mutation in the general population.</title>
        <authorList>
            <person name="Blakemore A.I."/>
            <person name="Singleton H."/>
            <person name="Pollitt R.J."/>
            <person name="Engel P.C."/>
            <person name="Kolvraa S."/>
            <person name="Gregersen N."/>
            <person name="Curtis D."/>
        </authorList>
    </citation>
    <scope>VARIANT ACADMD GLU-329</scope>
</reference>
<reference key="30">
    <citation type="journal article" date="1994" name="Am. J. Hum. Genet.">
        <title>Disease-causing mutations in exon 11 of the medium-chain acyl-CoA dehydrogenase gene.</title>
        <authorList>
            <person name="Andresen B.S."/>
            <person name="Jensen T.G."/>
            <person name="Bross P."/>
            <person name="Knudsen I."/>
            <person name="Winter V."/>
            <person name="Koelvraa S."/>
            <person name="Bolund L."/>
            <person name="Ding J.-H."/>
            <person name="Chen Y.-T."/>
            <person name="van Hove J.L.K."/>
            <person name="Curtis D."/>
            <person name="Yokota I."/>
            <person name="Tanaka K."/>
            <person name="Kim J.-J.P."/>
            <person name="Gregersen N."/>
        </authorList>
    </citation>
    <scope>VARIANTS ACADMD THR-326 AND ARG-336</scope>
</reference>
<reference key="31">
    <citation type="journal article" date="1995" name="Pediatr. Res.">
        <title>Medium chain acyl-CoA dehydrogenase deficiency in Pennsylvania: neonatal screening shows high incidence and unexpected mutation frequencies.</title>
        <authorList>
            <person name="Ziadeh R."/>
            <person name="Hoffman E.P."/>
            <person name="Finegold D.N."/>
            <person name="Hoop R.C."/>
            <person name="Brackett J.C."/>
            <person name="Strauss A.W."/>
            <person name="Naylor E.W."/>
        </authorList>
    </citation>
    <scope>VARIANT ACADMD 115-GLY-CYS-116 DEL</scope>
</reference>
<reference key="32">
    <citation type="journal article" date="1994" name="J. Clin. Invest.">
        <title>A novel mutation in medium chain acyl-CoA dehydrogenase causes sudden neonatal death.</title>
        <authorList>
            <person name="Brackett J.C."/>
            <person name="Sims H.F."/>
            <person name="Steiner R.D."/>
            <person name="Nunge M."/>
            <person name="Zimmerman E.M."/>
            <person name="Demartinville B."/>
            <person name="Rinaldo P."/>
            <person name="Slaugh R."/>
            <person name="Strauss A.W."/>
        </authorList>
    </citation>
    <scope>VARIANT ACADMD ARG-195</scope>
</reference>
<reference key="33">
    <citation type="journal article" date="1997" name="Hum. Mol. Genet.">
        <title>The molecular basis of medium-chain acyl-CoA dehydrogenase (MCAD) deficiency in compound heterozygous patients: is there correlation between genotype and phenotype?</title>
        <authorList>
            <person name="Andresen B.S."/>
            <person name="Bross P."/>
            <person name="Udvari S."/>
            <person name="Kirk J."/>
            <person name="Gray G."/>
            <person name="Kmoch S."/>
            <person name="Chamoles N."/>
            <person name="Knudsen I."/>
            <person name="Winter V."/>
            <person name="Wilcken B."/>
            <person name="Yokota I."/>
            <person name="Hart K."/>
            <person name="Packman S."/>
            <person name="Harpey J.P."/>
            <person name="Saudubray J.-M."/>
            <person name="Hale D.E."/>
            <person name="Bolund L."/>
            <person name="Koelvraa S."/>
            <person name="Gregersen N."/>
        </authorList>
    </citation>
    <scope>VARIANTS ACADMD TYR-116; ALA-193 AND CYS-352</scope>
</reference>
<reference key="34">
    <citation type="journal article" date="1999" name="Biochem. J.">
        <title>Biochemical characterization of a variant human medium-chain acyl-CoA dehydrogenase with a disease-associated mutation localized in the active site.</title>
        <authorList>
            <person name="Kuchler B."/>
            <person name="Abdel-Ghany A.G."/>
            <person name="Bross P."/>
            <person name="Nandy A."/>
            <person name="Rasched I."/>
            <person name="Ghisla S."/>
        </authorList>
    </citation>
    <scope>CHARACTERIZATION OF VARIANT ACADMD ALA-193</scope>
</reference>
<reference key="35">
    <citation type="journal article" date="2000" name="Mol. Genet. Metab.">
        <title>Identification of a novel mutation in patients with medium-chain acyl-CoA dehydrogenase deficiency.</title>
        <authorList>
            <person name="Yang B.-Z."/>
            <person name="Ding J.-H."/>
            <person name="Zhou C."/>
            <person name="Dimachkie M.M."/>
            <person name="Sweetman L."/>
            <person name="Dasouki M.J."/>
            <person name="Wilkinson J."/>
            <person name="Roe C.R."/>
        </authorList>
    </citation>
    <scope>VARIANTS ACADMD LEU-206 AND GLU-329</scope>
</reference>
<reference key="36">
    <citation type="journal article" date="2001" name="Am. J. Hum. Genet.">
        <title>Medium-chain acyl-CoA dehydrogenase (MCAD) mutations identified by MS/MS-based prospective screening of newborns differ from those observed in patients with clinical symptoms: identification and characterization of a new, prevalent mutation that results in mild MCAD deficiency.</title>
        <authorList>
            <person name="Andresen B.S."/>
            <person name="Dobrowolski S.F."/>
            <person name="O'Reilly L."/>
            <person name="Muenzer J."/>
            <person name="McCandless S.E."/>
            <person name="Frazier D.M."/>
            <person name="Udvari S."/>
            <person name="Bross P."/>
            <person name="Knudsen I."/>
            <person name="Banas R."/>
            <person name="Chace D.H."/>
            <person name="Engel P.C."/>
            <person name="Naylor E.W."/>
            <person name="Gregersen N."/>
        </authorList>
    </citation>
    <scope>VARIANTS ACADMD HIS-67; THR-78; ILE-121 AND ARG-310</scope>
</reference>
<reference key="37">
    <citation type="journal article" date="2001" name="Hum. Genet.">
        <title>Molecular and functional characterization of mild MCAD deficiency.</title>
        <authorList>
            <person name="Zschocke J."/>
            <person name="Schulze A."/>
            <person name="Lindner M."/>
            <person name="Fiesel S."/>
            <person name="Olgemoller K."/>
            <person name="Hoffmann G.F."/>
            <person name="Penzien J."/>
            <person name="Ruiter J.P.N."/>
            <person name="Wanders R.J.A."/>
            <person name="Mayatepek E."/>
        </authorList>
    </citation>
    <scope>VARIANT ACADMD LEU-245</scope>
</reference>
<reference key="38">
    <citation type="journal article" date="2001" name="J. Inherit. Metab. Dis.">
        <title>Compound heterozygosity in four asymptomatic siblings with medium-chain acyl-CoA dehydrogenase deficiency.</title>
        <authorList>
            <person name="Albers S."/>
            <person name="Levy H.L."/>
            <person name="Irons M."/>
            <person name="Strauss A.W."/>
            <person name="Marsden D."/>
        </authorList>
    </citation>
    <scope>VARIANTS ACADMD THR-281 AND GLU-329</scope>
</reference>
<reference key="39">
    <citation type="journal article" date="2006" name="Science">
        <title>The consensus coding sequences of human breast and colorectal cancers.</title>
        <authorList>
            <person name="Sjoeblom T."/>
            <person name="Jones S."/>
            <person name="Wood L.D."/>
            <person name="Parsons D.W."/>
            <person name="Lin J."/>
            <person name="Barber T.D."/>
            <person name="Mandelker D."/>
            <person name="Leary R.J."/>
            <person name="Ptak J."/>
            <person name="Silliman N."/>
            <person name="Szabo S."/>
            <person name="Buckhaults P."/>
            <person name="Farrell C."/>
            <person name="Meeh P."/>
            <person name="Markowitz S.D."/>
            <person name="Willis J."/>
            <person name="Dawson D."/>
            <person name="Willson J.K.V."/>
            <person name="Gazdar A.F."/>
            <person name="Hartigan J."/>
            <person name="Wu L."/>
            <person name="Liu C."/>
            <person name="Parmigiani G."/>
            <person name="Park B.H."/>
            <person name="Bachman K.E."/>
            <person name="Papadopoulos N."/>
            <person name="Vogelstein B."/>
            <person name="Kinzler K.W."/>
            <person name="Velculescu V.E."/>
        </authorList>
    </citation>
    <scope>VARIANT [LARGE SCALE ANALYSIS] ARG-132</scope>
</reference>
<feature type="transit peptide" description="Mitochondrion" evidence="37">
    <location>
        <begin position="1"/>
        <end position="25"/>
    </location>
</feature>
<feature type="chain" id="PRO_0000000502" description="Medium-chain specific acyl-CoA dehydrogenase, mitochondrial">
    <location>
        <begin position="26"/>
        <end position="421"/>
    </location>
</feature>
<feature type="active site" description="Proton acceptor" evidence="15 26">
    <location>
        <position position="401"/>
    </location>
</feature>
<feature type="binding site" description="in other chain" evidence="8 9 26 29 39 40 41 42 43 44">
    <location>
        <begin position="158"/>
        <end position="167"/>
    </location>
    <ligand>
        <name>FAD</name>
        <dbReference type="ChEBI" id="CHEBI:57692"/>
        <note>ligand shared between dimeric partners</note>
    </ligand>
</feature>
<feature type="binding site" evidence="26 39">
    <location>
        <position position="167"/>
    </location>
    <ligand>
        <name>octanoyl-CoA</name>
        <dbReference type="ChEBI" id="CHEBI:57386"/>
    </ligand>
</feature>
<feature type="binding site" description="in other chain" evidence="8 9 26 29 39 40 41 42 43 44">
    <location>
        <begin position="191"/>
        <end position="193"/>
    </location>
    <ligand>
        <name>FAD</name>
        <dbReference type="ChEBI" id="CHEBI:57692"/>
        <note>ligand shared between dimeric partners</note>
    </ligand>
</feature>
<feature type="binding site" evidence="26 39">
    <location>
        <position position="278"/>
    </location>
    <ligand>
        <name>octanoyl-CoA</name>
        <dbReference type="ChEBI" id="CHEBI:57386"/>
    </ligand>
</feature>
<feature type="binding site" evidence="26 39">
    <location>
        <position position="281"/>
    </location>
    <ligand>
        <name>octanoyl-CoA</name>
        <dbReference type="ChEBI" id="CHEBI:57386"/>
    </ligand>
</feature>
<feature type="binding site" evidence="8 9 26 29 39 40 41 42 43 44">
    <location>
        <begin position="306"/>
        <end position="308"/>
    </location>
    <ligand>
        <name>FAD</name>
        <dbReference type="ChEBI" id="CHEBI:57692"/>
        <note>ligand shared between dimeric partners</note>
    </ligand>
</feature>
<feature type="binding site" description="in other chain" evidence="8 9 26 29 39 40 41 42 43 44">
    <location>
        <begin position="316"/>
        <end position="317"/>
    </location>
    <ligand>
        <name>FAD</name>
        <dbReference type="ChEBI" id="CHEBI:57692"/>
        <note>ligand shared between dimeric partners</note>
    </ligand>
</feature>
<feature type="binding site" evidence="8 9 26 29 39 40 41 42 43 44">
    <location>
        <begin position="374"/>
        <end position="378"/>
    </location>
    <ligand>
        <name>FAD</name>
        <dbReference type="ChEBI" id="CHEBI:57692"/>
        <note>ligand shared between dimeric partners</note>
    </ligand>
</feature>
<feature type="binding site" description="in other chain" evidence="8 9 26 29 39 40 41 42 43 44">
    <location>
        <begin position="401"/>
        <end position="405"/>
    </location>
    <ligand>
        <name>FAD</name>
        <dbReference type="ChEBI" id="CHEBI:57692"/>
        <note>ligand shared between dimeric partners</note>
    </ligand>
</feature>
<feature type="binding site" evidence="26 39">
    <location>
        <position position="401"/>
    </location>
    <ligand>
        <name>octanoyl-CoA</name>
        <dbReference type="ChEBI" id="CHEBI:57386"/>
    </ligand>
</feature>
<feature type="modified residue" description="N6-acetyllysine; alternate" evidence="2">
    <location>
        <position position="69"/>
    </location>
</feature>
<feature type="modified residue" description="N6-succinyllysine; alternate" evidence="2">
    <location>
        <position position="69"/>
    </location>
</feature>
<feature type="modified residue" description="N6-succinyllysine" evidence="2">
    <location>
        <position position="179"/>
    </location>
</feature>
<feature type="modified residue" description="N6-acetyllysine; alternate" evidence="2">
    <location>
        <position position="212"/>
    </location>
</feature>
<feature type="modified residue" description="N6-succinyllysine; alternate" evidence="2">
    <location>
        <position position="212"/>
    </location>
</feature>
<feature type="modified residue" description="N6-acetyllysine; alternate" evidence="2">
    <location>
        <position position="217"/>
    </location>
</feature>
<feature type="modified residue" description="N6-succinyllysine; alternate" evidence="2">
    <location>
        <position position="217"/>
    </location>
</feature>
<feature type="modified residue" description="N6-acetyllysine; alternate" evidence="2">
    <location>
        <position position="259"/>
    </location>
</feature>
<feature type="modified residue" description="N6-succinyllysine; alternate" evidence="2">
    <location>
        <position position="259"/>
    </location>
</feature>
<feature type="modified residue" description="N6-acetyllysine; alternate" evidence="2">
    <location>
        <position position="271"/>
    </location>
</feature>
<feature type="modified residue" description="N6-succinyllysine; alternate" evidence="2">
    <location>
        <position position="271"/>
    </location>
</feature>
<feature type="modified residue" description="N6-acetyllysine" evidence="45">
    <location>
        <position position="279"/>
    </location>
</feature>
<feature type="modified residue" description="N6-acetyllysine" evidence="45">
    <location>
        <position position="301"/>
    </location>
</feature>
<feature type="modified residue" description="Phosphothreonine" evidence="2">
    <location>
        <position position="351"/>
    </location>
</feature>
<feature type="splice variant" id="VSP_038420" description="In isoform 2." evidence="32">
    <original>R</original>
    <variation>RCSLQ</variation>
    <location>
        <position position="10"/>
    </location>
</feature>
<feature type="sequence variant" id="VAR_000317" description="In ACADMD; dbSNP:rs398123072." evidence="7">
    <original>R</original>
    <variation>C</variation>
    <location>
        <position position="53"/>
    </location>
</feature>
<feature type="sequence variant" id="VAR_013698" description="In ACADMD; mild; dbSNP:rs121434280." evidence="4">
    <original>Y</original>
    <variation>H</variation>
    <location>
        <position position="67"/>
    </location>
</feature>
<feature type="sequence variant" id="VAR_015954" description="In ACADMD; dbSNP:rs398123074." evidence="4">
    <original>I</original>
    <variation>T</variation>
    <location>
        <position position="78"/>
    </location>
</feature>
<feature type="sequence variant" id="VAR_000318" description="In ACADMD." evidence="22">
    <location>
        <begin position="115"/>
        <end position="116"/>
    </location>
</feature>
<feature type="sequence variant" id="VAR_015955" description="In ACADMD; dbSNP:rs875989859." evidence="27">
    <original>C</original>
    <variation>Y</variation>
    <location>
        <position position="116"/>
    </location>
</feature>
<feature type="sequence variant" id="VAR_015956" description="In ACADMD; dbSNP:rs121434283." evidence="4">
    <original>T</original>
    <variation>I</variation>
    <location>
        <position position="121"/>
    </location>
</feature>
<feature type="sequence variant" id="VAR_035716" description="In a breast cancer sample; somatic mutation; dbSNP:rs875989854." evidence="13">
    <original>P</original>
    <variation>R</variation>
    <location>
        <position position="132"/>
    </location>
</feature>
<feature type="sequence variant" id="VAR_000319" description="In ACADMD; dbSNP:rs121434277." evidence="12">
    <original>M</original>
    <variation>I</variation>
    <location>
        <position position="149"/>
    </location>
</feature>
<feature type="sequence variant" id="VAR_000320" description="In ACADMD; the thermostability is markedly decreased; dbSNP:rs121434279." evidence="27 28">
    <original>T</original>
    <variation>A</variation>
    <location>
        <position position="193"/>
    </location>
</feature>
<feature type="sequence variant" id="VAR_000321" description="In ACADMD; dbSNP:rs121434278." evidence="23">
    <original>G</original>
    <variation>R</variation>
    <location>
        <position position="195"/>
    </location>
</feature>
<feature type="sequence variant" id="VAR_015957" description="In ACADMD; dbSNP:rs200724875." evidence="3">
    <original>R</original>
    <variation>L</variation>
    <location>
        <position position="206"/>
    </location>
</feature>
<feature type="sequence variant" id="VAR_000322" description="In ACADMD; dbSNP:rs121434276." evidence="12">
    <original>C</original>
    <variation>R</variation>
    <location>
        <position position="244"/>
    </location>
</feature>
<feature type="sequence variant" id="VAR_013699" description="In ACADMD; dbSNP:rs121434281." evidence="5">
    <original>S</original>
    <variation>L</variation>
    <location>
        <position position="245"/>
    </location>
</feature>
<feature type="sequence variant" id="VAR_000323" description="In ACADMD; dbSNP:rs121434274." evidence="12">
    <original>G</original>
    <variation>R</variation>
    <location>
        <position position="267"/>
    </location>
</feature>
<feature type="sequence variant" id="VAR_013700" description="In ACADMD; mild clinical phenotype; dbSNP:rs121434282." evidence="6">
    <original>R</original>
    <variation>T</variation>
    <location>
        <position position="281"/>
    </location>
</feature>
<feature type="sequence variant" id="VAR_015958" description="In ACADMD; dbSNP:rs747268471." evidence="4">
    <original>G</original>
    <variation>R</variation>
    <location>
        <position position="310"/>
    </location>
</feature>
<feature type="sequence variant" id="VAR_000324" description="In ACADMD; dbSNP:rs786204631." evidence="24">
    <original>M</original>
    <variation>T</variation>
    <location>
        <position position="326"/>
    </location>
</feature>
<feature type="sequence variant" id="VAR_000325" description="In ACADMD; may alter splicing; decreased fatty acid beta-oxidation; dbSNP:rs77931234." evidence="3 6 11 14 17 18 19">
    <original>K</original>
    <variation>E</variation>
    <location>
        <position position="329"/>
    </location>
</feature>
<feature type="sequence variant" id="VAR_000326" description="In ACADMD." evidence="24">
    <original>S</original>
    <variation>R</variation>
    <location>
        <position position="336"/>
    </location>
</feature>
<feature type="sequence variant" id="VAR_015959" description="In ACADMD; dbSNP:rs1227800781." evidence="27">
    <original>Y</original>
    <variation>C</variation>
    <location>
        <position position="352"/>
    </location>
</feature>
<feature type="sequence variant" id="VAR_000327" description="In ACADMD; dbSNP:rs121434275." evidence="12">
    <original>I</original>
    <variation>T</variation>
    <location>
        <position position="375"/>
    </location>
</feature>
<feature type="mutagenesis site" description="Strongly reduced rate of electron transfer to ETF." evidence="8">
    <original>L</original>
    <variation>M</variation>
    <location>
        <position position="86"/>
    </location>
</feature>
<feature type="mutagenesis site" description="Strongly reduced rate of electron transfer to ETF." evidence="8">
    <original>L</original>
    <variation>W</variation>
    <location>
        <position position="98"/>
    </location>
</feature>
<feature type="mutagenesis site" description="Strongly reduced rate of electron transfer to ETF." evidence="8">
    <original>L</original>
    <variation>Y</variation>
    <location>
        <position position="100"/>
    </location>
</feature>
<feature type="mutagenesis site" description="Strongly reduced rate of electron transfer to ETF." evidence="8">
    <original>I</original>
    <variation>M</variation>
    <location>
        <position position="108"/>
    </location>
</feature>
<feature type="mutagenesis site" description="Loss of electron transfer to ETF." evidence="9">
    <original>W</original>
    <variation>A</variation>
    <location>
        <position position="191"/>
    </location>
</feature>
<feature type="mutagenesis site" description="Reduces rate of electron transfer to ETF about six-fold." evidence="9">
    <original>W</original>
    <variation>F</variation>
    <location>
        <position position="191"/>
    </location>
</feature>
<feature type="mutagenesis site" description="Strongly reduced rate of electron transfer to ETF." evidence="8 9">
    <original>E</original>
    <variation>A</variation>
    <location>
        <position position="237"/>
    </location>
</feature>
<feature type="mutagenesis site" description="Narrower substrate specificity. Changed substrate specificity towards longer acyl chains; when associated with G-401. Loss of acyl-CoA dehydrogenase activity; when associated with T-410." evidence="25">
    <original>T</original>
    <variation>E</variation>
    <location>
        <position position="280"/>
    </location>
</feature>
<feature type="mutagenesis site" description="Reduces rate of electron transfer to ETF three-fold." evidence="8 9">
    <original>E</original>
    <variation>A</variation>
    <location>
        <position position="384"/>
    </location>
</feature>
<feature type="mutagenesis site" description="Reduces rate of electron transfer to ETF two-fold." evidence="8 9">
    <original>E</original>
    <variation>Q</variation>
    <location>
        <position position="384"/>
    </location>
</feature>
<feature type="mutagenesis site" description="Changed substrate specificity towards longer acyl chains; when associated with E-280." evidence="25">
    <original>E</original>
    <variation>G</variation>
    <location>
        <position position="401"/>
    </location>
</feature>
<feature type="mutagenesis site" description="Loss of acyl-CoA dehydrogenase activity." evidence="15">
    <original>E</original>
    <variation>Q</variation>
    <location>
        <position position="401"/>
    </location>
</feature>
<feature type="mutagenesis site" description="Loss of acyl-CoA dehydrogenase activity; when associated with E-280." evidence="25">
    <original>E</original>
    <variation>T</variation>
    <location>
        <position position="401"/>
    </location>
</feature>
<feature type="sequence conflict" description="In Ref. 3; AAF63626." evidence="33" ref="3">
    <original>I</original>
    <variation>T</variation>
    <location>
        <position position="356"/>
    </location>
</feature>
<feature type="strand" evidence="47">
    <location>
        <begin position="36"/>
        <end position="38"/>
    </location>
</feature>
<feature type="helix" evidence="49">
    <location>
        <begin position="43"/>
        <end position="58"/>
    </location>
</feature>
<feature type="helix" evidence="49">
    <location>
        <begin position="61"/>
        <end position="70"/>
    </location>
</feature>
<feature type="helix" evidence="49">
    <location>
        <begin position="75"/>
        <end position="83"/>
    </location>
</feature>
<feature type="helix" evidence="49">
    <location>
        <begin position="93"/>
        <end position="95"/>
    </location>
</feature>
<feature type="helix" evidence="49">
    <location>
        <begin position="102"/>
        <end position="115"/>
    </location>
</feature>
<feature type="helix" evidence="49">
    <location>
        <begin position="117"/>
        <end position="136"/>
    </location>
</feature>
<feature type="helix" evidence="49">
    <location>
        <begin position="139"/>
        <end position="145"/>
    </location>
</feature>
<feature type="helix" evidence="49">
    <location>
        <begin position="147"/>
        <end position="151"/>
    </location>
</feature>
<feature type="strand" evidence="49">
    <location>
        <begin position="155"/>
        <end position="159"/>
    </location>
</feature>
<feature type="strand" evidence="49">
    <location>
        <begin position="165"/>
        <end position="167"/>
    </location>
</feature>
<feature type="helix" evidence="49">
    <location>
        <begin position="169"/>
        <end position="171"/>
    </location>
</feature>
<feature type="strand" evidence="49">
    <location>
        <begin position="175"/>
        <end position="179"/>
    </location>
</feature>
<feature type="strand" evidence="49">
    <location>
        <begin position="182"/>
        <end position="193"/>
    </location>
</feature>
<feature type="turn" evidence="49">
    <location>
        <begin position="194"/>
        <end position="197"/>
    </location>
</feature>
<feature type="strand" evidence="49">
    <location>
        <begin position="198"/>
        <end position="206"/>
    </location>
</feature>
<feature type="helix" evidence="49">
    <location>
        <begin position="215"/>
        <end position="218"/>
    </location>
</feature>
<feature type="strand" evidence="49">
    <location>
        <begin position="219"/>
        <end position="225"/>
    </location>
</feature>
<feature type="strand" evidence="49">
    <location>
        <begin position="231"/>
        <end position="236"/>
    </location>
</feature>
<feature type="strand" evidence="49">
    <location>
        <begin position="239"/>
        <end position="241"/>
    </location>
</feature>
<feature type="strand" evidence="49">
    <location>
        <begin position="247"/>
        <end position="258"/>
    </location>
</feature>
<feature type="helix" evidence="49">
    <location>
        <begin position="259"/>
        <end position="261"/>
    </location>
</feature>
<feature type="strand" evidence="49">
    <location>
        <begin position="262"/>
        <end position="265"/>
    </location>
</feature>
<feature type="turn" evidence="48">
    <location>
        <begin position="266"/>
        <end position="268"/>
    </location>
</feature>
<feature type="helix" evidence="49">
    <location>
        <begin position="269"/>
        <end position="303"/>
    </location>
</feature>
<feature type="strand" evidence="46">
    <location>
        <begin position="309"/>
        <end position="312"/>
    </location>
</feature>
<feature type="helix" evidence="49">
    <location>
        <begin position="313"/>
        <end position="315"/>
    </location>
</feature>
<feature type="helix" evidence="49">
    <location>
        <begin position="317"/>
        <end position="345"/>
    </location>
</feature>
<feature type="helix" evidence="49">
    <location>
        <begin position="351"/>
        <end position="376"/>
    </location>
</feature>
<feature type="helix" evidence="49">
    <location>
        <begin position="377"/>
        <end position="381"/>
    </location>
</feature>
<feature type="helix" evidence="49">
    <location>
        <begin position="387"/>
        <end position="394"/>
    </location>
</feature>
<feature type="helix" evidence="49">
    <location>
        <begin position="395"/>
        <end position="398"/>
    </location>
</feature>
<feature type="strand" evidence="49">
    <location>
        <begin position="400"/>
        <end position="402"/>
    </location>
</feature>
<feature type="helix" evidence="49">
    <location>
        <begin position="404"/>
        <end position="417"/>
    </location>
</feature>
<gene>
    <name evidence="38" type="primary">ACADM</name>
</gene>
<dbReference type="EC" id="1.3.8.7" evidence="15 16 25"/>
<dbReference type="EMBL" id="M16827">
    <property type="protein sequence ID" value="AAA51566.1"/>
    <property type="molecule type" value="mRNA"/>
</dbReference>
<dbReference type="EMBL" id="M91432">
    <property type="protein sequence ID" value="AAA59567.1"/>
    <property type="molecule type" value="Genomic_DNA"/>
</dbReference>
<dbReference type="EMBL" id="M91421">
    <property type="protein sequence ID" value="AAA59567.1"/>
    <property type="status" value="JOINED"/>
    <property type="molecule type" value="Genomic_DNA"/>
</dbReference>
<dbReference type="EMBL" id="M91422">
    <property type="protein sequence ID" value="AAA59567.1"/>
    <property type="status" value="JOINED"/>
    <property type="molecule type" value="Genomic_DNA"/>
</dbReference>
<dbReference type="EMBL" id="M91423">
    <property type="protein sequence ID" value="AAA59567.1"/>
    <property type="status" value="JOINED"/>
    <property type="molecule type" value="Genomic_DNA"/>
</dbReference>
<dbReference type="EMBL" id="M91425">
    <property type="protein sequence ID" value="AAA59567.1"/>
    <property type="status" value="JOINED"/>
    <property type="molecule type" value="Genomic_DNA"/>
</dbReference>
<dbReference type="EMBL" id="M91426">
    <property type="protein sequence ID" value="AAA59567.1"/>
    <property type="status" value="JOINED"/>
    <property type="molecule type" value="Genomic_DNA"/>
</dbReference>
<dbReference type="EMBL" id="M91427">
    <property type="protein sequence ID" value="AAA59567.1"/>
    <property type="status" value="JOINED"/>
    <property type="molecule type" value="Genomic_DNA"/>
</dbReference>
<dbReference type="EMBL" id="M91428">
    <property type="protein sequence ID" value="AAA59567.1"/>
    <property type="status" value="JOINED"/>
    <property type="molecule type" value="Genomic_DNA"/>
</dbReference>
<dbReference type="EMBL" id="M91429">
    <property type="protein sequence ID" value="AAA59567.1"/>
    <property type="status" value="JOINED"/>
    <property type="molecule type" value="Genomic_DNA"/>
</dbReference>
<dbReference type="EMBL" id="M91430">
    <property type="protein sequence ID" value="AAA59567.1"/>
    <property type="status" value="JOINED"/>
    <property type="molecule type" value="Genomic_DNA"/>
</dbReference>
<dbReference type="EMBL" id="M91431">
    <property type="protein sequence ID" value="AAA59567.1"/>
    <property type="status" value="JOINED"/>
    <property type="molecule type" value="Genomic_DNA"/>
</dbReference>
<dbReference type="EMBL" id="AF251043">
    <property type="protein sequence ID" value="AAF63626.1"/>
    <property type="molecule type" value="mRNA"/>
</dbReference>
<dbReference type="EMBL" id="AK312629">
    <property type="protein sequence ID" value="BAG35514.1"/>
    <property type="molecule type" value="mRNA"/>
</dbReference>
<dbReference type="EMBL" id="AL357314">
    <property type="status" value="NOT_ANNOTATED_CDS"/>
    <property type="molecule type" value="Genomic_DNA"/>
</dbReference>
<dbReference type="EMBL" id="CH471059">
    <property type="protein sequence ID" value="EAX06401.1"/>
    <property type="molecule type" value="Genomic_DNA"/>
</dbReference>
<dbReference type="EMBL" id="BC005377">
    <property type="protein sequence ID" value="AAH05377.1"/>
    <property type="molecule type" value="mRNA"/>
</dbReference>
<dbReference type="EMBL" id="M60505">
    <property type="protein sequence ID" value="AAB59625.1"/>
    <property type="molecule type" value="Genomic_DNA"/>
</dbReference>
<dbReference type="CCDS" id="CCDS44165.1">
    <molecule id="P11310-2"/>
</dbReference>
<dbReference type="CCDS" id="CCDS668.1">
    <molecule id="P11310-1"/>
</dbReference>
<dbReference type="PIR" id="A29031">
    <property type="entry name" value="DEHUCM"/>
</dbReference>
<dbReference type="RefSeq" id="NP_000007.1">
    <molecule id="P11310-1"/>
    <property type="nucleotide sequence ID" value="NM_000016.6"/>
</dbReference>
<dbReference type="RefSeq" id="NP_001120800.1">
    <molecule id="P11310-2"/>
    <property type="nucleotide sequence ID" value="NM_001127328.3"/>
</dbReference>
<dbReference type="PDB" id="1EGC">
    <property type="method" value="X-ray"/>
    <property type="resolution" value="2.60 A"/>
    <property type="chains" value="A/B/C/D=26-421"/>
</dbReference>
<dbReference type="PDB" id="1EGD">
    <property type="method" value="X-ray"/>
    <property type="resolution" value="2.40 A"/>
    <property type="chains" value="A/B/C/D=26-421"/>
</dbReference>
<dbReference type="PDB" id="1EGE">
    <property type="method" value="X-ray"/>
    <property type="resolution" value="2.75 A"/>
    <property type="chains" value="A/B/C/D=26-421"/>
</dbReference>
<dbReference type="PDB" id="1T9G">
    <property type="method" value="X-ray"/>
    <property type="resolution" value="2.90 A"/>
    <property type="chains" value="A/B/C/D=26-421"/>
</dbReference>
<dbReference type="PDB" id="2A1T">
    <property type="method" value="X-ray"/>
    <property type="resolution" value="2.80 A"/>
    <property type="chains" value="A/B/C/D=1-421"/>
</dbReference>
<dbReference type="PDB" id="4P13">
    <property type="method" value="X-ray"/>
    <property type="resolution" value="1.73 A"/>
    <property type="chains" value="A/B/C/D=35-421"/>
</dbReference>
<dbReference type="PDB" id="8SGP">
    <property type="method" value="EM"/>
    <property type="resolution" value="2.69 A"/>
    <property type="chains" value="A/B/C/D=1-421"/>
</dbReference>
<dbReference type="PDBsum" id="1EGC"/>
<dbReference type="PDBsum" id="1EGD"/>
<dbReference type="PDBsum" id="1EGE"/>
<dbReference type="PDBsum" id="1T9G"/>
<dbReference type="PDBsum" id="2A1T"/>
<dbReference type="PDBsum" id="4P13"/>
<dbReference type="PDBsum" id="8SGP"/>
<dbReference type="EMDB" id="EMD-40463"/>
<dbReference type="SMR" id="P11310"/>
<dbReference type="BioGRID" id="106552">
    <property type="interactions" value="147"/>
</dbReference>
<dbReference type="DIP" id="DIP-34281N"/>
<dbReference type="FunCoup" id="P11310">
    <property type="interactions" value="1145"/>
</dbReference>
<dbReference type="IntAct" id="P11310">
    <property type="interactions" value="48"/>
</dbReference>
<dbReference type="MINT" id="P11310"/>
<dbReference type="STRING" id="9606.ENSP00000359871"/>
<dbReference type="ChEMBL" id="CHEMBL4295713"/>
<dbReference type="DrugBank" id="DB03415">
    <property type="generic name" value="3-thiaoctanoyl-CoA"/>
</dbReference>
<dbReference type="DrugBank" id="DB03147">
    <property type="generic name" value="Flavin adenine dinucleotide"/>
</dbReference>
<dbReference type="DrugBank" id="DB02910">
    <property type="generic name" value="Octanoyl-Coenzyme A"/>
</dbReference>
<dbReference type="SwissLipids" id="SLP:000001334"/>
<dbReference type="GlyGen" id="P11310">
    <property type="glycosylation" value="1 site, 1 O-linked glycan (1 site)"/>
</dbReference>
<dbReference type="iPTMnet" id="P11310"/>
<dbReference type="PhosphoSitePlus" id="P11310"/>
<dbReference type="SwissPalm" id="P11310"/>
<dbReference type="BioMuta" id="ACADM"/>
<dbReference type="DMDM" id="113017"/>
<dbReference type="REPRODUCTION-2DPAGE" id="IPI00005040"/>
<dbReference type="jPOST" id="P11310"/>
<dbReference type="MassIVE" id="P11310"/>
<dbReference type="PaxDb" id="9606-ENSP00000359871"/>
<dbReference type="PeptideAtlas" id="P11310"/>
<dbReference type="ProteomicsDB" id="52743">
    <molecule id="P11310-1"/>
</dbReference>
<dbReference type="ProteomicsDB" id="52744">
    <molecule id="P11310-2"/>
</dbReference>
<dbReference type="Pumba" id="P11310"/>
<dbReference type="Antibodypedia" id="1642">
    <property type="antibodies" value="466 antibodies from 38 providers"/>
</dbReference>
<dbReference type="DNASU" id="34"/>
<dbReference type="Ensembl" id="ENST00000370841.9">
    <molecule id="P11310-1"/>
    <property type="protein sequence ID" value="ENSP00000359878.5"/>
    <property type="gene ID" value="ENSG00000117054.15"/>
</dbReference>
<dbReference type="Ensembl" id="ENST00000420607.6">
    <molecule id="P11310-2"/>
    <property type="protein sequence ID" value="ENSP00000409612.2"/>
    <property type="gene ID" value="ENSG00000117054.15"/>
</dbReference>
<dbReference type="GeneID" id="34"/>
<dbReference type="KEGG" id="hsa:34"/>
<dbReference type="MANE-Select" id="ENST00000370841.9">
    <property type="protein sequence ID" value="ENSP00000359878.5"/>
    <property type="RefSeq nucleotide sequence ID" value="NM_000016.6"/>
    <property type="RefSeq protein sequence ID" value="NP_000007.1"/>
</dbReference>
<dbReference type="UCSC" id="uc001dgw.6">
    <molecule id="P11310-1"/>
    <property type="organism name" value="human"/>
</dbReference>
<dbReference type="AGR" id="HGNC:89"/>
<dbReference type="CTD" id="34"/>
<dbReference type="DisGeNET" id="34"/>
<dbReference type="GeneCards" id="ACADM"/>
<dbReference type="GeneReviews" id="ACADM"/>
<dbReference type="HGNC" id="HGNC:89">
    <property type="gene designation" value="ACADM"/>
</dbReference>
<dbReference type="HPA" id="ENSG00000117054">
    <property type="expression patterns" value="Tissue enhanced (liver, skeletal muscle, tongue)"/>
</dbReference>
<dbReference type="MalaCards" id="ACADM"/>
<dbReference type="MIM" id="201450">
    <property type="type" value="phenotype"/>
</dbReference>
<dbReference type="MIM" id="607008">
    <property type="type" value="gene"/>
</dbReference>
<dbReference type="neXtProt" id="NX_P11310"/>
<dbReference type="OpenTargets" id="ENSG00000117054"/>
<dbReference type="Orphanet" id="42">
    <property type="disease" value="Medium chain acyl-CoA dehydrogenase deficiency"/>
</dbReference>
<dbReference type="PharmGKB" id="PA24425"/>
<dbReference type="VEuPathDB" id="HostDB:ENSG00000117054"/>
<dbReference type="eggNOG" id="KOG0140">
    <property type="taxonomic scope" value="Eukaryota"/>
</dbReference>
<dbReference type="GeneTree" id="ENSGT00940000158429"/>
<dbReference type="InParanoid" id="P11310"/>
<dbReference type="OMA" id="NYDKMGV"/>
<dbReference type="OrthoDB" id="434771at2759"/>
<dbReference type="PAN-GO" id="P11310">
    <property type="GO annotations" value="5 GO annotations based on evolutionary models"/>
</dbReference>
<dbReference type="PhylomeDB" id="P11310"/>
<dbReference type="TreeFam" id="TF105020"/>
<dbReference type="BioCyc" id="MetaCyc:HS04089-MONOMER"/>
<dbReference type="BRENDA" id="1.3.8.7">
    <property type="organism ID" value="2681"/>
</dbReference>
<dbReference type="PathwayCommons" id="P11310"/>
<dbReference type="Reactome" id="R-HSA-1989781">
    <property type="pathway name" value="PPARA activates gene expression"/>
</dbReference>
<dbReference type="Reactome" id="R-HSA-77288">
    <property type="pathway name" value="mitochondrial fatty acid beta-oxidation of unsaturated fatty acids"/>
</dbReference>
<dbReference type="Reactome" id="R-HSA-77346">
    <property type="pathway name" value="Beta oxidation of decanoyl-CoA to octanoyl-CoA-CoA"/>
</dbReference>
<dbReference type="Reactome" id="R-HSA-77348">
    <property type="pathway name" value="Beta oxidation of octanoyl-CoA to hexanoyl-CoA"/>
</dbReference>
<dbReference type="SABIO-RK" id="P11310"/>
<dbReference type="SignaLink" id="P11310"/>
<dbReference type="SIGNOR" id="P11310"/>
<dbReference type="UniPathway" id="UPA00660"/>
<dbReference type="BioGRID-ORCS" id="34">
    <property type="hits" value="15 hits in 1160 CRISPR screens"/>
</dbReference>
<dbReference type="ChiTaRS" id="ACADM">
    <property type="organism name" value="human"/>
</dbReference>
<dbReference type="EvolutionaryTrace" id="P11310"/>
<dbReference type="GenomeRNAi" id="34"/>
<dbReference type="Pharos" id="P11310">
    <property type="development level" value="Tbio"/>
</dbReference>
<dbReference type="PRO" id="PR:P11310"/>
<dbReference type="Proteomes" id="UP000005640">
    <property type="component" value="Chromosome 1"/>
</dbReference>
<dbReference type="RNAct" id="P11310">
    <property type="molecule type" value="protein"/>
</dbReference>
<dbReference type="Bgee" id="ENSG00000117054">
    <property type="expression patterns" value="Expressed in jejunal mucosa and 206 other cell types or tissues"/>
</dbReference>
<dbReference type="ExpressionAtlas" id="P11310">
    <property type="expression patterns" value="baseline and differential"/>
</dbReference>
<dbReference type="GO" id="GO:0030424">
    <property type="term" value="C:axon"/>
    <property type="evidence" value="ECO:0000314"/>
    <property type="project" value="UniProtKB"/>
</dbReference>
<dbReference type="GO" id="GO:0005737">
    <property type="term" value="C:cytoplasm"/>
    <property type="evidence" value="ECO:0000318"/>
    <property type="project" value="GO_Central"/>
</dbReference>
<dbReference type="GO" id="GO:0005759">
    <property type="term" value="C:mitochondrial matrix"/>
    <property type="evidence" value="ECO:0000314"/>
    <property type="project" value="BHF-UCL"/>
</dbReference>
<dbReference type="GO" id="GO:0031966">
    <property type="term" value="C:mitochondrial membrane"/>
    <property type="evidence" value="ECO:0000314"/>
    <property type="project" value="BHF-UCL"/>
</dbReference>
<dbReference type="GO" id="GO:0005739">
    <property type="term" value="C:mitochondrion"/>
    <property type="evidence" value="ECO:0000314"/>
    <property type="project" value="LIFEdb"/>
</dbReference>
<dbReference type="GO" id="GO:0005634">
    <property type="term" value="C:nucleus"/>
    <property type="evidence" value="ECO:0007005"/>
    <property type="project" value="UniProtKB"/>
</dbReference>
<dbReference type="GO" id="GO:0003995">
    <property type="term" value="F:acyl-CoA dehydrogenase activity"/>
    <property type="evidence" value="ECO:0000314"/>
    <property type="project" value="BHF-UCL"/>
</dbReference>
<dbReference type="GO" id="GO:0050660">
    <property type="term" value="F:flavin adenine dinucleotide binding"/>
    <property type="evidence" value="ECO:0007669"/>
    <property type="project" value="InterPro"/>
</dbReference>
<dbReference type="GO" id="GO:0042802">
    <property type="term" value="F:identical protein binding"/>
    <property type="evidence" value="ECO:0000314"/>
    <property type="project" value="BHF-UCL"/>
</dbReference>
<dbReference type="GO" id="GO:0070991">
    <property type="term" value="F:medium-chain fatty acyl-CoA dehydrogenase activity"/>
    <property type="evidence" value="ECO:0000314"/>
    <property type="project" value="BHF-UCL"/>
</dbReference>
<dbReference type="GO" id="GO:0055007">
    <property type="term" value="P:cardiac muscle cell differentiation"/>
    <property type="evidence" value="ECO:0007669"/>
    <property type="project" value="Ensembl"/>
</dbReference>
<dbReference type="GO" id="GO:0045329">
    <property type="term" value="P:carnitine biosynthetic process"/>
    <property type="evidence" value="ECO:0000315"/>
    <property type="project" value="BHF-UCL"/>
</dbReference>
<dbReference type="GO" id="GO:0019254">
    <property type="term" value="P:carnitine metabolic process, CoA-linked"/>
    <property type="evidence" value="ECO:0000315"/>
    <property type="project" value="BHF-UCL"/>
</dbReference>
<dbReference type="GO" id="GO:0006635">
    <property type="term" value="P:fatty acid beta-oxidation"/>
    <property type="evidence" value="ECO:0000315"/>
    <property type="project" value="UniProtKB"/>
</dbReference>
<dbReference type="GO" id="GO:0033539">
    <property type="term" value="P:fatty acid beta-oxidation using acyl-CoA dehydrogenase"/>
    <property type="evidence" value="ECO:0000314"/>
    <property type="project" value="UniProtKB"/>
</dbReference>
<dbReference type="GO" id="GO:0005978">
    <property type="term" value="P:glycogen biosynthetic process"/>
    <property type="evidence" value="ECO:0007669"/>
    <property type="project" value="Ensembl"/>
</dbReference>
<dbReference type="GO" id="GO:0001889">
    <property type="term" value="P:liver development"/>
    <property type="evidence" value="ECO:0007669"/>
    <property type="project" value="Ensembl"/>
</dbReference>
<dbReference type="GO" id="GO:0051793">
    <property type="term" value="P:medium-chain fatty acid catabolic process"/>
    <property type="evidence" value="ECO:0000314"/>
    <property type="project" value="BHF-UCL"/>
</dbReference>
<dbReference type="GO" id="GO:0051791">
    <property type="term" value="P:medium-chain fatty acid metabolic process"/>
    <property type="evidence" value="ECO:0000314"/>
    <property type="project" value="BHF-UCL"/>
</dbReference>
<dbReference type="GO" id="GO:0009791">
    <property type="term" value="P:post-embryonic development"/>
    <property type="evidence" value="ECO:0007669"/>
    <property type="project" value="Ensembl"/>
</dbReference>
<dbReference type="GO" id="GO:0006111">
    <property type="term" value="P:regulation of gluconeogenesis"/>
    <property type="evidence" value="ECO:0007669"/>
    <property type="project" value="Ensembl"/>
</dbReference>
<dbReference type="GO" id="GO:0009409">
    <property type="term" value="P:response to cold"/>
    <property type="evidence" value="ECO:0007669"/>
    <property type="project" value="Ensembl"/>
</dbReference>
<dbReference type="GO" id="GO:0042594">
    <property type="term" value="P:response to starvation"/>
    <property type="evidence" value="ECO:0007669"/>
    <property type="project" value="Ensembl"/>
</dbReference>
<dbReference type="CDD" id="cd01157">
    <property type="entry name" value="MCAD"/>
    <property type="match status" value="1"/>
</dbReference>
<dbReference type="FunFam" id="1.10.540.10:FF:000010">
    <property type="entry name" value="Medium-chain specific acyl-CoA dehydrogenase, mitochondrial"/>
    <property type="match status" value="1"/>
</dbReference>
<dbReference type="FunFam" id="1.20.140.10:FF:000011">
    <property type="entry name" value="Medium-chain specific acyl-CoA dehydrogenase, mitochondrial"/>
    <property type="match status" value="1"/>
</dbReference>
<dbReference type="FunFam" id="2.40.110.10:FF:000007">
    <property type="entry name" value="Medium-chain specific acyl-CoA dehydrogenase, mitochondrial"/>
    <property type="match status" value="1"/>
</dbReference>
<dbReference type="Gene3D" id="1.10.540.10">
    <property type="entry name" value="Acyl-CoA dehydrogenase/oxidase, N-terminal domain"/>
    <property type="match status" value="1"/>
</dbReference>
<dbReference type="Gene3D" id="2.40.110.10">
    <property type="entry name" value="Butyryl-CoA Dehydrogenase, subunit A, domain 2"/>
    <property type="match status" value="1"/>
</dbReference>
<dbReference type="Gene3D" id="1.20.140.10">
    <property type="entry name" value="Butyryl-CoA Dehydrogenase, subunit A, domain 3"/>
    <property type="match status" value="1"/>
</dbReference>
<dbReference type="InterPro" id="IPR050741">
    <property type="entry name" value="Acyl-CoA_dehydrogenase"/>
</dbReference>
<dbReference type="InterPro" id="IPR006089">
    <property type="entry name" value="Acyl-CoA_DH_CS"/>
</dbReference>
<dbReference type="InterPro" id="IPR006091">
    <property type="entry name" value="Acyl-CoA_Oxase/DH_mid-dom"/>
</dbReference>
<dbReference type="InterPro" id="IPR046373">
    <property type="entry name" value="Acyl-CoA_Oxase/DH_mid-dom_sf"/>
</dbReference>
<dbReference type="InterPro" id="IPR036250">
    <property type="entry name" value="AcylCo_DH-like_C"/>
</dbReference>
<dbReference type="InterPro" id="IPR009075">
    <property type="entry name" value="AcylCo_DH/oxidase_C"/>
</dbReference>
<dbReference type="InterPro" id="IPR013786">
    <property type="entry name" value="AcylCoA_DH/ox_N"/>
</dbReference>
<dbReference type="InterPro" id="IPR037069">
    <property type="entry name" value="AcylCoA_DH/ox_N_sf"/>
</dbReference>
<dbReference type="InterPro" id="IPR009100">
    <property type="entry name" value="AcylCoA_DH/oxidase_NM_dom_sf"/>
</dbReference>
<dbReference type="InterPro" id="IPR034180">
    <property type="entry name" value="MCAD"/>
</dbReference>
<dbReference type="PANTHER" id="PTHR48083:SF2">
    <property type="entry name" value="MEDIUM-CHAIN SPECIFIC ACYL-COA DEHYDROGENASE, MITOCHONDRIAL"/>
    <property type="match status" value="1"/>
</dbReference>
<dbReference type="PANTHER" id="PTHR48083">
    <property type="entry name" value="MEDIUM-CHAIN SPECIFIC ACYL-COA DEHYDROGENASE, MITOCHONDRIAL-RELATED"/>
    <property type="match status" value="1"/>
</dbReference>
<dbReference type="Pfam" id="PF00441">
    <property type="entry name" value="Acyl-CoA_dh_1"/>
    <property type="match status" value="1"/>
</dbReference>
<dbReference type="Pfam" id="PF02770">
    <property type="entry name" value="Acyl-CoA_dh_M"/>
    <property type="match status" value="1"/>
</dbReference>
<dbReference type="Pfam" id="PF02771">
    <property type="entry name" value="Acyl-CoA_dh_N"/>
    <property type="match status" value="1"/>
</dbReference>
<dbReference type="PIRSF" id="PIRSF016578">
    <property type="entry name" value="HsaA"/>
    <property type="match status" value="1"/>
</dbReference>
<dbReference type="SUPFAM" id="SSF47203">
    <property type="entry name" value="Acyl-CoA dehydrogenase C-terminal domain-like"/>
    <property type="match status" value="1"/>
</dbReference>
<dbReference type="SUPFAM" id="SSF56645">
    <property type="entry name" value="Acyl-CoA dehydrogenase NM domain-like"/>
    <property type="match status" value="1"/>
</dbReference>
<dbReference type="PROSITE" id="PS00072">
    <property type="entry name" value="ACYL_COA_DH_1"/>
    <property type="match status" value="1"/>
</dbReference>
<dbReference type="PROSITE" id="PS00073">
    <property type="entry name" value="ACYL_COA_DH_2"/>
    <property type="match status" value="1"/>
</dbReference>
<name>ACADM_HUMAN</name>
<accession>P11310</accession>
<accession>Q5T4U4</accession>
<accession>Q9NYF1</accession>
<proteinExistence type="evidence at protein level"/>
<protein>
    <recommendedName>
        <fullName evidence="35">Medium-chain specific acyl-CoA dehydrogenase, mitochondrial</fullName>
        <shortName evidence="30">MCAD</shortName>
        <ecNumber evidence="15 16 25">1.3.8.7</ecNumber>
    </recommendedName>
    <alternativeName>
        <fullName evidence="31">Medium chain acyl-CoA dehydrogenase</fullName>
        <shortName evidence="31">MCADH</shortName>
    </alternativeName>
</protein>